<gene>
    <name type="primary">CSF1R</name>
    <name type="synonym">FMS</name>
</gene>
<feature type="signal peptide" evidence="3">
    <location>
        <begin position="1"/>
        <end position="19"/>
    </location>
</feature>
<feature type="chain" id="PRO_0000016765" description="Macrophage colony-stimulating factor 1 receptor">
    <location>
        <begin position="20"/>
        <end position="972"/>
    </location>
</feature>
<feature type="topological domain" description="Extracellular" evidence="3">
    <location>
        <begin position="20"/>
        <end position="517"/>
    </location>
</feature>
<feature type="transmembrane region" description="Helical" evidence="3">
    <location>
        <begin position="518"/>
        <end position="538"/>
    </location>
</feature>
<feature type="topological domain" description="Cytoplasmic" evidence="3">
    <location>
        <begin position="539"/>
        <end position="972"/>
    </location>
</feature>
<feature type="domain" description="Ig-like C2-type 1">
    <location>
        <begin position="21"/>
        <end position="104"/>
    </location>
</feature>
<feature type="domain" description="Ig-like C2-type 2">
    <location>
        <begin position="107"/>
        <end position="197"/>
    </location>
</feature>
<feature type="domain" description="Ig-like C2-type 3">
    <location>
        <begin position="203"/>
        <end position="290"/>
    </location>
</feature>
<feature type="domain" description="Ig-like C2-type 4">
    <location>
        <begin position="299"/>
        <end position="399"/>
    </location>
</feature>
<feature type="domain" description="Ig-like C2-type 5">
    <location>
        <begin position="402"/>
        <end position="502"/>
    </location>
</feature>
<feature type="domain" description="Protein kinase" evidence="5">
    <location>
        <begin position="582"/>
        <end position="910"/>
    </location>
</feature>
<feature type="region of interest" description="Regulatory juxtamembrane domain">
    <location>
        <begin position="542"/>
        <end position="574"/>
    </location>
</feature>
<feature type="region of interest" description="Activation loop">
    <location>
        <begin position="796"/>
        <end position="818"/>
    </location>
</feature>
<feature type="region of interest" description="Disordered" evidence="7">
    <location>
        <begin position="918"/>
        <end position="950"/>
    </location>
</feature>
<feature type="compositionally biased region" description="Low complexity" evidence="7">
    <location>
        <begin position="928"/>
        <end position="940"/>
    </location>
</feature>
<feature type="active site" description="Proton acceptor" evidence="5 6">
    <location>
        <position position="778"/>
    </location>
</feature>
<feature type="binding site" evidence="5">
    <location>
        <begin position="588"/>
        <end position="596"/>
    </location>
    <ligand>
        <name>ATP</name>
        <dbReference type="ChEBI" id="CHEBI:30616"/>
    </ligand>
</feature>
<feature type="binding site" evidence="37">
    <location>
        <position position="616"/>
    </location>
    <ligand>
        <name>ATP</name>
        <dbReference type="ChEBI" id="CHEBI:30616"/>
    </ligand>
</feature>
<feature type="modified residue" description="Phosphotyrosine; by autocatalysis" evidence="24">
    <location>
        <position position="546"/>
    </location>
</feature>
<feature type="modified residue" description="Phosphotyrosine; by autocatalysis" evidence="2">
    <location>
        <position position="561"/>
    </location>
</feature>
<feature type="modified residue" description="Phosphotyrosine; by autocatalysis" evidence="24 38">
    <location>
        <position position="699"/>
    </location>
</feature>
<feature type="modified residue" description="Phosphotyrosine; by autocatalysis" evidence="24">
    <location>
        <position position="708"/>
    </location>
</feature>
<feature type="modified residue" description="Phosphoserine" evidence="38">
    <location>
        <position position="713"/>
    </location>
</feature>
<feature type="modified residue" description="Phosphotyrosine; by autocatalysis" evidence="24">
    <location>
        <position position="723"/>
    </location>
</feature>
<feature type="modified residue" description="Phosphotyrosine; by autocatalysis" evidence="24">
    <location>
        <position position="809"/>
    </location>
</feature>
<feature type="modified residue" description="Phosphotyrosine; by autocatalysis" evidence="2">
    <location>
        <position position="923"/>
    </location>
</feature>
<feature type="modified residue" description="Phosphotyrosine; by autocatalysis" evidence="2">
    <location>
        <position position="969"/>
    </location>
</feature>
<feature type="glycosylation site" description="N-linked (GlcNAc...) asparagine" evidence="3">
    <location>
        <position position="45"/>
    </location>
</feature>
<feature type="glycosylation site" description="N-linked (GlcNAc...) asparagine" evidence="3">
    <location>
        <position position="73"/>
    </location>
</feature>
<feature type="glycosylation site" description="N-linked (GlcNAc...) asparagine" evidence="3">
    <location>
        <position position="153"/>
    </location>
</feature>
<feature type="glycosylation site" description="N-linked (GlcNAc...) asparagine" evidence="3">
    <location>
        <position position="240"/>
    </location>
</feature>
<feature type="glycosylation site" description="N-linked (GlcNAc...) asparagine" evidence="3">
    <location>
        <position position="275"/>
    </location>
</feature>
<feature type="glycosylation site" description="N-linked (GlcNAc...) asparagine" evidence="12">
    <location>
        <position position="302"/>
    </location>
</feature>
<feature type="glycosylation site" description="N-linked (GlcNAc...) asparagine" evidence="3">
    <location>
        <position position="335"/>
    </location>
</feature>
<feature type="glycosylation site" description="N-linked (GlcNAc...) asparagine" evidence="12">
    <location>
        <position position="353"/>
    </location>
</feature>
<feature type="glycosylation site" description="N-linked (GlcNAc...) asparagine" evidence="3">
    <location>
        <position position="412"/>
    </location>
</feature>
<feature type="glycosylation site" description="N-linked (GlcNAc...) asparagine" evidence="3">
    <location>
        <position position="428"/>
    </location>
</feature>
<feature type="glycosylation site" description="N-linked (GlcNAc...) asparagine" evidence="3">
    <location>
        <position position="480"/>
    </location>
</feature>
<feature type="disulfide bond" evidence="4">
    <location>
        <begin position="42"/>
        <end position="84"/>
    </location>
</feature>
<feature type="disulfide bond" evidence="4">
    <location>
        <begin position="127"/>
        <end position="177"/>
    </location>
</feature>
<feature type="disulfide bond" evidence="4">
    <location>
        <begin position="224"/>
        <end position="278"/>
    </location>
</feature>
<feature type="disulfide bond" evidence="4">
    <location>
        <begin position="419"/>
        <end position="485"/>
    </location>
</feature>
<feature type="splice variant" id="VSP_047757" description="In isoform 2." evidence="36">
    <original>ESAYLNLSSE</original>
    <variation>GTPSPSLCPA</variation>
    <location>
        <begin position="297"/>
        <end position="306"/>
    </location>
</feature>
<feature type="splice variant" id="VSP_047758" description="In isoform 2." evidence="36">
    <location>
        <begin position="307"/>
        <end position="972"/>
    </location>
</feature>
<feature type="sequence variant" id="VAR_042038" description="In dbSNP:rs56048668." evidence="16">
    <original>V</original>
    <variation>G</variation>
    <location>
        <position position="32"/>
    </location>
</feature>
<feature type="sequence variant" id="VAR_083140" description="In BANDDOS; impairs phosphorylation of JNK kinases upon stimulation with CSF1; dbSNP:rs1351319114." evidence="32">
    <original>P</original>
    <variation>L</variation>
    <location>
        <position position="132"/>
    </location>
</feature>
<feature type="sequence variant" id="VAR_061290" description="In dbSNP:rs41338945.">
    <original>A</original>
    <variation>S</variation>
    <location>
        <position position="245"/>
    </location>
</feature>
<feature type="sequence variant" id="VAR_049718" description="In dbSNP:rs3829986.">
    <original>V</original>
    <variation>M</variation>
    <location>
        <position position="279"/>
    </location>
</feature>
<feature type="sequence variant" id="VAR_042039" description="In dbSNP:rs10079250." evidence="16">
    <original>H</original>
    <variation>R</variation>
    <location>
        <position position="362"/>
    </location>
</feature>
<feature type="sequence variant" id="VAR_042040" description="In dbSNP:rs34951517." evidence="16">
    <original>G</original>
    <variation>S</variation>
    <location>
        <position position="413"/>
    </location>
</feature>
<feature type="sequence variant" id="VAR_083141" description="In BANDDOS; dbSNP:rs917027829." evidence="32">
    <location>
        <begin position="481"/>
        <end position="972"/>
    </location>
</feature>
<feature type="sequence variant" id="VAR_042041" description="In dbSNP:rs55942044." evidence="16">
    <original>L</original>
    <variation>V</variation>
    <location>
        <position position="536"/>
    </location>
</feature>
<feature type="sequence variant" id="VAR_067396" description="In HDLS1." evidence="27">
    <original>GKTLGAGAFGKVVEATAFGLGKEDAVLKVAVKMLK</original>
    <variation>A</variation>
    <location>
        <begin position="585"/>
        <end position="619"/>
    </location>
</feature>
<feature type="sequence variant" id="VAR_067397" description="In HDLS1; dbSNP:rs281860268." evidence="27">
    <original>G</original>
    <variation>E</variation>
    <location>
        <position position="589"/>
    </location>
</feature>
<feature type="sequence variant" id="VAR_083142" description="In BANDDOS; impairs phosphorylation of JNK kinases upon stimulation with CSF1; dbSNP:rs1554101963." evidence="32">
    <location>
        <position position="627"/>
    </location>
</feature>
<feature type="sequence variant" id="VAR_067398" description="In HDLS1; impairs autophosphorylation upon stimulation with CSF1; dbSNP:rs281860269." evidence="27">
    <original>E</original>
    <variation>K</variation>
    <location>
        <position position="633"/>
    </location>
</feature>
<feature type="sequence variant" id="VAR_083143" description="In BANDDOS; dbSNP:rs184499252." evidence="31">
    <original>H</original>
    <variation>Q</variation>
    <location>
        <position position="643"/>
    </location>
</feature>
<feature type="sequence variant" id="VAR_072081" description="In HDLS1; dbSNP:rs690016559." evidence="30">
    <original>C</original>
    <variation>R</variation>
    <location>
        <position position="653"/>
    </location>
</feature>
<feature type="sequence variant" id="VAR_042042" description="In a lung squamous cell carcinoma sample; somatic mutation." evidence="16">
    <original>P</original>
    <variation>H</variation>
    <location>
        <position position="693"/>
    </location>
</feature>
<feature type="sequence variant" id="VAR_067399" description="In dbSNP:rs201569135." evidence="27">
    <original>R</original>
    <variation>H</variation>
    <location>
        <position position="710"/>
    </location>
</feature>
<feature type="sequence variant" id="VAR_067400" description="In dbSNP:rs41355444." evidence="27">
    <original>G</original>
    <variation>R</variation>
    <location>
        <position position="747"/>
    </location>
</feature>
<feature type="sequence variant" id="VAR_083144" description="In HDLS1; impairs autophosphorylation upon stimulation with CSF1; dbSNP:rs690016566." evidence="29">
    <original>G</original>
    <variation>D</variation>
    <location>
        <position position="765"/>
    </location>
</feature>
<feature type="sequence variant" id="VAR_067401" description="In HDLS1; impairs autophosphorylation upon stimulation with CSF1; dbSNP:rs281860270." evidence="27 28">
    <original>M</original>
    <variation>T</variation>
    <location>
        <position position="766"/>
    </location>
</feature>
<feature type="sequence variant" id="VAR_067402" description="In HDLS1; dbSNP:rs281860271." evidence="27">
    <original>A</original>
    <variation>P</variation>
    <location>
        <position position="770"/>
    </location>
</feature>
<feature type="sequence variant" id="VAR_067403" description="In HDLS1." evidence="27">
    <location>
        <begin position="774"/>
        <end position="814"/>
    </location>
</feature>
<feature type="sequence variant" id="VAR_067404" description="In HDLS1; impairs autophosphorylation upon stimulation with CSF1; dbSNP:rs281860273." evidence="27">
    <original>I</original>
    <variation>N</variation>
    <location>
        <position position="775"/>
    </location>
</feature>
<feature type="sequence variant" id="VAR_083145" description="In HDLS1; impairs autophosphorylation upon stimulation with CSF1; dbSNP:rs587777247." evidence="29">
    <original>A</original>
    <variation>E</variation>
    <location>
        <position position="781"/>
    </location>
</feature>
<feature type="sequence variant" id="VAR_083146" description="In HDLS1; impairs autophosphorylation upon stimulation with CSF1; dbSNP:rs281860281." evidence="28">
    <original>R</original>
    <variation>H</variation>
    <location>
        <position position="782"/>
    </location>
</feature>
<feature type="sequence variant" id="VAR_067405" description="In HDLS1; impairs autophosphorylation upon stimulation with CSF1; dbSNP:rs281860274." evidence="27 29">
    <original>I</original>
    <variation>T</variation>
    <location>
        <position position="794"/>
    </location>
</feature>
<feature type="sequence variant" id="VAR_083147" description="In HDLS1; impairs autophosphorylation upon stimulation with CSF1." evidence="29">
    <original>P</original>
    <variation>S</variation>
    <location>
        <position position="824"/>
    </location>
</feature>
<feature type="sequence variant" id="VAR_067406" description="In HDLS1; dbSNP:rs387906662." evidence="27">
    <original>D</original>
    <variation>Y</variation>
    <location>
        <position position="837"/>
    </location>
</feature>
<feature type="sequence variant" id="VAR_072082" description="In HDLS1; dbSNP:rs690016558." evidence="30">
    <original>I</original>
    <variation>F</variation>
    <location>
        <position position="843"/>
    </location>
</feature>
<feature type="sequence variant" id="VAR_067407" description="In HDLS1; dbSNP:rs281860277." evidence="27">
    <original>F</original>
    <variation>S</variation>
    <location>
        <position position="849"/>
    </location>
</feature>
<feature type="sequence variant" id="VAR_067408" description="In HDLS1." evidence="27">
    <location>
        <position position="849"/>
    </location>
</feature>
<feature type="sequence variant" id="VAR_067409" description="In HDLS1; dbSNP:rs281860278." evidence="27">
    <original>L</original>
    <variation>P</variation>
    <location>
        <position position="868"/>
    </location>
</feature>
<feature type="sequence variant" id="VAR_067410" description="In HDLS1; impairs autophosphorylation upon stimulation with CSF1; dbSNP:rs281860279." evidence="27 28">
    <original>M</original>
    <variation>T</variation>
    <location>
        <position position="875"/>
    </location>
</feature>
<feature type="sequence variant" id="VAR_067411" description="In HDLS1; dbSNP:rs281860280." evidence="27">
    <original>P</original>
    <variation>T</variation>
    <location>
        <position position="878"/>
    </location>
</feature>
<feature type="sequence variant" id="VAR_072083" description="In HDLS1; dbSNP:rs690016560." evidence="30">
    <original>I</original>
    <variation>T</variation>
    <location>
        <position position="906"/>
    </location>
</feature>
<feature type="sequence variant" id="VAR_042043" description="In dbSNP:rs34030164." evidence="16 27">
    <original>E</original>
    <variation>D</variation>
    <location>
        <position position="920"/>
    </location>
</feature>
<feature type="sequence variant" id="VAR_042044" description="In dbSNP:rs56059682." evidence="16">
    <original>R</original>
    <variation>Q</variation>
    <location>
        <position position="921"/>
    </location>
</feature>
<feature type="sequence variant" id="VAR_011953" description="In dbSNP:rs1801271.">
    <original>Y</original>
    <variation>C</variation>
    <location>
        <position position="969"/>
    </location>
</feature>
<feature type="mutagenesis site" description="Constitutive kinase activity." evidence="10">
    <original>L</original>
    <variation>S</variation>
    <location>
        <position position="301"/>
    </location>
</feature>
<feature type="mutagenesis site" description="Impairs degradation of activated CSF1R." evidence="8">
    <original>Y</original>
    <variation>F</variation>
    <location>
        <position position="708"/>
    </location>
</feature>
<feature type="mutagenesis site" description="Constitutive kinase activity. Loss of inhibition by imatinib." evidence="8 11">
    <original>D</original>
    <variation>V</variation>
    <location>
        <position position="802"/>
    </location>
</feature>
<feature type="mutagenesis site" description="Reduced kinase activity. Reduced interaction with SRC, FYN and YES1." evidence="33">
    <original>Y</original>
    <variation>F</variation>
    <location>
        <position position="809"/>
    </location>
</feature>
<feature type="mutagenesis site" description="Abolishes down-regulation of activated CSF1R." evidence="10">
    <original>Y</original>
    <variation>F</variation>
    <location>
        <position position="969"/>
    </location>
</feature>
<feature type="sequence conflict" description="In Ref. 2; CAA27300." evidence="37" ref="2">
    <original>P</original>
    <variation>A</variation>
    <location>
        <position position="54"/>
    </location>
</feature>
<feature type="sequence conflict" description="In Ref. 7; AAH47521." evidence="37" ref="7">
    <original>P</original>
    <variation>H</variation>
    <location>
        <position position="247"/>
    </location>
</feature>
<feature type="sequence conflict" description="In Ref. 7; AAH47521." evidence="37" ref="7">
    <original>A</original>
    <variation>V</variation>
    <location>
        <position position="354"/>
    </location>
</feature>
<feature type="sequence conflict" description="In Ref. 7; AAH47521." evidence="37" ref="7">
    <original>A</original>
    <variation>S</variation>
    <location>
        <position position="629"/>
    </location>
</feature>
<feature type="strand" evidence="43">
    <location>
        <begin position="22"/>
        <end position="25"/>
    </location>
</feature>
<feature type="strand" evidence="43">
    <location>
        <begin position="27"/>
        <end position="32"/>
    </location>
</feature>
<feature type="strand" evidence="43">
    <location>
        <begin position="38"/>
        <end position="43"/>
    </location>
</feature>
<feature type="strand" evidence="43">
    <location>
        <begin position="49"/>
        <end position="51"/>
    </location>
</feature>
<feature type="turn" evidence="43">
    <location>
        <begin position="55"/>
        <end position="57"/>
    </location>
</feature>
<feature type="strand" evidence="43">
    <location>
        <begin position="58"/>
        <end position="62"/>
    </location>
</feature>
<feature type="strand" evidence="43">
    <location>
        <begin position="64"/>
        <end position="73"/>
    </location>
</feature>
<feature type="helix" evidence="43">
    <location>
        <begin position="76"/>
        <end position="78"/>
    </location>
</feature>
<feature type="strand" evidence="43">
    <location>
        <begin position="80"/>
        <end position="85"/>
    </location>
</feature>
<feature type="strand" evidence="43">
    <location>
        <begin position="95"/>
        <end position="101"/>
    </location>
</feature>
<feature type="strand" evidence="43">
    <location>
        <begin position="108"/>
        <end position="111"/>
    </location>
</feature>
<feature type="strand" evidence="43">
    <location>
        <begin position="113"/>
        <end position="118"/>
    </location>
</feature>
<feature type="strand" evidence="43">
    <location>
        <begin position="123"/>
        <end position="125"/>
    </location>
</feature>
<feature type="strand" evidence="43">
    <location>
        <begin position="127"/>
        <end position="130"/>
    </location>
</feature>
<feature type="helix" evidence="43">
    <location>
        <begin position="132"/>
        <end position="137"/>
    </location>
</feature>
<feature type="strand" evidence="43">
    <location>
        <begin position="139"/>
        <end position="142"/>
    </location>
</feature>
<feature type="helix" evidence="44">
    <location>
        <begin position="143"/>
        <end position="145"/>
    </location>
</feature>
<feature type="strand" evidence="43">
    <location>
        <begin position="154"/>
        <end position="157"/>
    </location>
</feature>
<feature type="turn" evidence="43">
    <location>
        <begin position="158"/>
        <end position="160"/>
    </location>
</feature>
<feature type="strand" evidence="43">
    <location>
        <begin position="161"/>
        <end position="166"/>
    </location>
</feature>
<feature type="helix" evidence="43">
    <location>
        <begin position="169"/>
        <end position="171"/>
    </location>
</feature>
<feature type="strand" evidence="43">
    <location>
        <begin position="173"/>
        <end position="181"/>
    </location>
</feature>
<feature type="strand" evidence="43">
    <location>
        <begin position="184"/>
        <end position="187"/>
    </location>
</feature>
<feature type="strand" evidence="43">
    <location>
        <begin position="191"/>
        <end position="196"/>
    </location>
</feature>
<feature type="strand" evidence="43">
    <location>
        <begin position="204"/>
        <end position="208"/>
    </location>
</feature>
<feature type="strand" evidence="43">
    <location>
        <begin position="210"/>
        <end position="215"/>
    </location>
</feature>
<feature type="strand" evidence="42">
    <location>
        <begin position="216"/>
        <end position="218"/>
    </location>
</feature>
<feature type="strand" evidence="43">
    <location>
        <begin position="220"/>
        <end position="231"/>
    </location>
</feature>
<feature type="strand" evidence="43">
    <location>
        <begin position="234"/>
        <end position="239"/>
    </location>
</feature>
<feature type="strand" evidence="43">
    <location>
        <begin position="248"/>
        <end position="252"/>
    </location>
</feature>
<feature type="strand" evidence="43">
    <location>
        <begin position="257"/>
        <end position="267"/>
    </location>
</feature>
<feature type="turn" evidence="43">
    <location>
        <begin position="270"/>
        <end position="272"/>
    </location>
</feature>
<feature type="strand" evidence="43">
    <location>
        <begin position="274"/>
        <end position="282"/>
    </location>
</feature>
<feature type="strand" evidence="43">
    <location>
        <begin position="285"/>
        <end position="298"/>
    </location>
</feature>
<feature type="strand" evidence="43">
    <location>
        <begin position="300"/>
        <end position="304"/>
    </location>
</feature>
<feature type="strand" evidence="43">
    <location>
        <begin position="309"/>
        <end position="314"/>
    </location>
</feature>
<feature type="strand" evidence="43">
    <location>
        <begin position="319"/>
        <end position="329"/>
    </location>
</feature>
<feature type="strand" evidence="43">
    <location>
        <begin position="332"/>
        <end position="338"/>
    </location>
</feature>
<feature type="strand" evidence="43">
    <location>
        <begin position="340"/>
        <end position="342"/>
    </location>
</feature>
<feature type="strand" evidence="43">
    <location>
        <begin position="351"/>
        <end position="354"/>
    </location>
</feature>
<feature type="strand" evidence="43">
    <location>
        <begin position="361"/>
        <end position="368"/>
    </location>
</feature>
<feature type="helix" evidence="43">
    <location>
        <begin position="373"/>
        <end position="375"/>
    </location>
</feature>
<feature type="strand" evidence="43">
    <location>
        <begin position="377"/>
        <end position="385"/>
    </location>
</feature>
<feature type="strand" evidence="43">
    <location>
        <begin position="388"/>
        <end position="411"/>
    </location>
</feature>
<feature type="strand" evidence="43">
    <location>
        <begin position="414"/>
        <end position="425"/>
    </location>
</feature>
<feature type="strand" evidence="43">
    <location>
        <begin position="428"/>
        <end position="437"/>
    </location>
</feature>
<feature type="turn" evidence="43">
    <location>
        <begin position="443"/>
        <end position="445"/>
    </location>
</feature>
<feature type="strand" evidence="43">
    <location>
        <begin position="446"/>
        <end position="454"/>
    </location>
</feature>
<feature type="strand" evidence="43">
    <location>
        <begin position="456"/>
        <end position="459"/>
    </location>
</feature>
<feature type="strand" evidence="43">
    <location>
        <begin position="466"/>
        <end position="473"/>
    </location>
</feature>
<feature type="strand" evidence="43">
    <location>
        <begin position="479"/>
        <end position="488"/>
    </location>
</feature>
<feature type="strand" evidence="43">
    <location>
        <begin position="493"/>
        <end position="498"/>
    </location>
</feature>
<feature type="strand" evidence="47">
    <location>
        <begin position="551"/>
        <end position="553"/>
    </location>
</feature>
<feature type="strand" evidence="40">
    <location>
        <begin position="556"/>
        <end position="560"/>
    </location>
</feature>
<feature type="helix" evidence="47">
    <location>
        <begin position="566"/>
        <end position="568"/>
    </location>
</feature>
<feature type="helix" evidence="47">
    <location>
        <begin position="573"/>
        <end position="575"/>
    </location>
</feature>
<feature type="helix" evidence="47">
    <location>
        <begin position="579"/>
        <end position="581"/>
    </location>
</feature>
<feature type="strand" evidence="47">
    <location>
        <begin position="582"/>
        <end position="590"/>
    </location>
</feature>
<feature type="strand" evidence="47">
    <location>
        <begin position="592"/>
        <end position="604"/>
    </location>
</feature>
<feature type="turn" evidence="47">
    <location>
        <begin position="605"/>
        <end position="608"/>
    </location>
</feature>
<feature type="strand" evidence="47">
    <location>
        <begin position="609"/>
        <end position="618"/>
    </location>
</feature>
<feature type="helix" evidence="47">
    <location>
        <begin position="624"/>
        <end position="640"/>
    </location>
</feature>
<feature type="strand" evidence="47">
    <location>
        <begin position="649"/>
        <end position="653"/>
    </location>
</feature>
<feature type="strand" evidence="47">
    <location>
        <begin position="655"/>
        <end position="658"/>
    </location>
</feature>
<feature type="strand" evidence="47">
    <location>
        <begin position="660"/>
        <end position="664"/>
    </location>
</feature>
<feature type="helix" evidence="47">
    <location>
        <begin position="671"/>
        <end position="683"/>
    </location>
</feature>
<feature type="turn" evidence="45">
    <location>
        <begin position="684"/>
        <end position="686"/>
    </location>
</feature>
<feature type="turn" evidence="39">
    <location>
        <begin position="742"/>
        <end position="744"/>
    </location>
</feature>
<feature type="helix" evidence="47">
    <location>
        <begin position="752"/>
        <end position="771"/>
    </location>
</feature>
<feature type="helix" evidence="47">
    <location>
        <begin position="781"/>
        <end position="783"/>
    </location>
</feature>
<feature type="strand" evidence="47">
    <location>
        <begin position="784"/>
        <end position="786"/>
    </location>
</feature>
<feature type="helix" evidence="47">
    <location>
        <begin position="788"/>
        <end position="790"/>
    </location>
</feature>
<feature type="strand" evidence="47">
    <location>
        <begin position="792"/>
        <end position="794"/>
    </location>
</feature>
<feature type="helix" evidence="47">
    <location>
        <begin position="798"/>
        <end position="800"/>
    </location>
</feature>
<feature type="helix" evidence="47">
    <location>
        <begin position="803"/>
        <end position="805"/>
    </location>
</feature>
<feature type="turn" evidence="41">
    <location>
        <begin position="806"/>
        <end position="808"/>
    </location>
</feature>
<feature type="strand" evidence="47">
    <location>
        <begin position="809"/>
        <end position="811"/>
    </location>
</feature>
<feature type="strand" evidence="46">
    <location>
        <begin position="815"/>
        <end position="817"/>
    </location>
</feature>
<feature type="helix" evidence="47">
    <location>
        <begin position="819"/>
        <end position="821"/>
    </location>
</feature>
<feature type="helix" evidence="47">
    <location>
        <begin position="824"/>
        <end position="829"/>
    </location>
</feature>
<feature type="helix" evidence="47">
    <location>
        <begin position="834"/>
        <end position="849"/>
    </location>
</feature>
<feature type="helix" evidence="47">
    <location>
        <begin position="863"/>
        <end position="870"/>
    </location>
</feature>
<feature type="helix" evidence="47">
    <location>
        <begin position="883"/>
        <end position="892"/>
    </location>
</feature>
<feature type="helix" evidence="47">
    <location>
        <begin position="897"/>
        <end position="899"/>
    </location>
</feature>
<feature type="helix" evidence="47">
    <location>
        <begin position="903"/>
        <end position="913"/>
    </location>
</feature>
<accession>P07333</accession>
<accession>B5A955</accession>
<accession>D3DQG2</accession>
<accession>Q6LDW5</accession>
<accession>Q6LDY4</accession>
<accession>Q86VW7</accession>
<keyword id="KW-0002">3D-structure</keyword>
<keyword id="KW-0025">Alternative splicing</keyword>
<keyword id="KW-0067">ATP-binding</keyword>
<keyword id="KW-1003">Cell membrane</keyword>
<keyword id="KW-0225">Disease variant</keyword>
<keyword id="KW-1015">Disulfide bond</keyword>
<keyword id="KW-0325">Glycoprotein</keyword>
<keyword id="KW-0391">Immunity</keyword>
<keyword id="KW-0393">Immunoglobulin domain</keyword>
<keyword id="KW-0395">Inflammatory response</keyword>
<keyword id="KW-0399">Innate immunity</keyword>
<keyword id="KW-0418">Kinase</keyword>
<keyword id="KW-0472">Membrane</keyword>
<keyword id="KW-0523">Neurodegeneration</keyword>
<keyword id="KW-0547">Nucleotide-binding</keyword>
<keyword id="KW-0597">Phosphoprotein</keyword>
<keyword id="KW-1267">Proteomics identification</keyword>
<keyword id="KW-0656">Proto-oncogene</keyword>
<keyword id="KW-0675">Receptor</keyword>
<keyword id="KW-1185">Reference proteome</keyword>
<keyword id="KW-0677">Repeat</keyword>
<keyword id="KW-0732">Signal</keyword>
<keyword id="KW-0808">Transferase</keyword>
<keyword id="KW-0812">Transmembrane</keyword>
<keyword id="KW-1133">Transmembrane helix</keyword>
<keyword id="KW-0829">Tyrosine-protein kinase</keyword>
<keyword id="KW-0832">Ubl conjugation</keyword>
<protein>
    <recommendedName>
        <fullName>Macrophage colony-stimulating factor 1 receptor</fullName>
    </recommendedName>
    <alternativeName>
        <fullName>CSF-1 receptor</fullName>
        <shortName>CSF-1-R</shortName>
        <shortName>CSF-1R</shortName>
        <shortName>M-CSF-R</shortName>
        <ecNumber>2.7.10.1</ecNumber>
    </alternativeName>
    <alternativeName>
        <fullName>Proto-oncogene c-Fms</fullName>
    </alternativeName>
    <cdAntigenName>CD115</cdAntigenName>
</protein>
<sequence length="972" mass="107984">MGPGVLLLLLVATAWHGQGIPVIEPSVPELVVKPGATVTLRCVGNGSVEWDGPPSPHWTLYSDGSSSILSTNNATFQNTGTYRCTEPGDPLGGSAAIHLYVKDPARPWNVLAQEVVVFEDQDALLPCLLTDPVLEAGVSLVRVRGRPLMRHTNYSFSPWHGFTIHRAKFIQSQDYQCSALMGGRKVMSISIRLKVQKVIPGPPALTLVPAELVRIRGEAAQIVCSASSVDVNFDVFLQHNNTKLAIPQQSDFHNNRYQKVLTLNLDQVDFQHAGNYSCVASNVQGKHSTSMFFRVVESAYLNLSSEQNLIQEVTVGEGLNLKVMVEAYPGLQGFNWTYLGPFSDHQPEPKLANATTKDTYRHTFTLSLPRLKPSEAGRYSFLARNPGGWRALTFELTLRYPPEVSVIWTFINGSGTLLCAASGYPQPNVTWLQCSGHTDRCDEAQVLQVWDDPYPEVLSQEPFHKVTVQSLLTVETLEHNQTYECRAHNSVGSGSWAFIPISAGAHTHPPDEFLFTPVVVACMSIMALLLLLLLLLLYKYKQKPKYQVRWKIIESYEGNSYTFIDPTQLPYNEKWEFPRNNLQFGKTLGAGAFGKVVEATAFGLGKEDAVLKVAVKMLKSTAHADEKEALMSELKIMSHLGQHENIVNLLGACTHGGPVLVITEYCCYGDLLNFLRRKAEAMLGPSLSPGQDPEGGVDYKNIHLEKKYVRRDSGFSSQGVDTYVEMRPVSTSSNDSFSEQDLDKEDGRPLELRDLLHFSSQVAQGMAFLASKNCIHRDVAARNVLLTNGHVAKIGDFGLARDIMNDSNYIVKGNARLPVKWMAPESIFDCVYTVQSDVWSYGILLWEIFSLGLNPYPGILVNSKFYKLVKDGYQMAQPAFAPKNIYSIMQACWALEPTHRPTFQQICSFLQEQAQEDRRERDYTNLPSSSRSGGSGSSSSELEEESSSEHLTCCEQGDIAQPLLQPNNYQFC</sequence>
<reference key="1">
    <citation type="journal article" date="1989" name="Oncogene Res.">
        <title>Nucleotide sequence and structural organization of the human FMS proto-oncogene.</title>
        <authorList>
            <person name="Hampe A."/>
            <person name="Shamoon B.M."/>
            <person name="Gobet M."/>
            <person name="Sherr C.J."/>
            <person name="Galibert F."/>
        </authorList>
    </citation>
    <scope>NUCLEOTIDE SEQUENCE [GENOMIC DNA]</scope>
</reference>
<reference key="2">
    <citation type="journal article" date="1986" name="Nature">
        <title>Structural alteration of viral homologue of receptor proto-oncogene fms at carboxyl terminus.</title>
        <authorList>
            <person name="Coussens L."/>
            <person name="van Beveren C."/>
            <person name="Smith D."/>
            <person name="Chen E."/>
            <person name="Mitchell R.L."/>
            <person name="Isacke C.M."/>
            <person name="Verma I.M."/>
            <person name="Ullrich A."/>
        </authorList>
    </citation>
    <scope>NUCLEOTIDE SEQUENCE [MRNA] (ISOFORM 1)</scope>
</reference>
<reference key="3">
    <citation type="journal article" date="1997" name="Genomics">
        <title>Sequence analysis of two genomic regions containing the KIT and the FMS receptor tyrosine kinase genes.</title>
        <authorList>
            <person name="Andre C."/>
            <person name="Hampe A."/>
            <person name="Lachaume P."/>
            <person name="Martin E."/>
            <person name="Wang X.P."/>
            <person name="Manus V."/>
            <person name="Hu W.X."/>
            <person name="Galibert F."/>
        </authorList>
    </citation>
    <scope>NUCLEOTIDE SEQUENCE [GENOMIC DNA]</scope>
    <source>
        <tissue>Placenta</tissue>
    </source>
</reference>
<reference key="4">
    <citation type="journal article" date="2008" name="Arthritis Res. Ther.">
        <title>Novel splice variants derived from the receptor tyrosine kinase superfamily are potential therapeutics for rheumatoid arthritis.</title>
        <authorList>
            <person name="Jin P."/>
            <person name="Zhang J."/>
            <person name="Sumariwalla P.F."/>
            <person name="Ni I."/>
            <person name="Jorgensen B."/>
            <person name="Crawford D."/>
            <person name="Phillips S."/>
            <person name="Feldmann M."/>
            <person name="Shepard H.M."/>
            <person name="Paleolog E.M."/>
        </authorList>
    </citation>
    <scope>NUCLEOTIDE SEQUENCE [MRNA] (ISOFORM 2)</scope>
</reference>
<reference key="5">
    <citation type="journal article" date="2004" name="Nature">
        <title>The DNA sequence and comparative analysis of human chromosome 5.</title>
        <authorList>
            <person name="Schmutz J."/>
            <person name="Martin J."/>
            <person name="Terry A."/>
            <person name="Couronne O."/>
            <person name="Grimwood J."/>
            <person name="Lowry S."/>
            <person name="Gordon L.A."/>
            <person name="Scott D."/>
            <person name="Xie G."/>
            <person name="Huang W."/>
            <person name="Hellsten U."/>
            <person name="Tran-Gyamfi M."/>
            <person name="She X."/>
            <person name="Prabhakar S."/>
            <person name="Aerts A."/>
            <person name="Altherr M."/>
            <person name="Bajorek E."/>
            <person name="Black S."/>
            <person name="Branscomb E."/>
            <person name="Caoile C."/>
            <person name="Challacombe J.F."/>
            <person name="Chan Y.M."/>
            <person name="Denys M."/>
            <person name="Detter J.C."/>
            <person name="Escobar J."/>
            <person name="Flowers D."/>
            <person name="Fotopulos D."/>
            <person name="Glavina T."/>
            <person name="Gomez M."/>
            <person name="Gonzales E."/>
            <person name="Goodstein D."/>
            <person name="Grigoriev I."/>
            <person name="Groza M."/>
            <person name="Hammon N."/>
            <person name="Hawkins T."/>
            <person name="Haydu L."/>
            <person name="Israni S."/>
            <person name="Jett J."/>
            <person name="Kadner K."/>
            <person name="Kimball H."/>
            <person name="Kobayashi A."/>
            <person name="Lopez F."/>
            <person name="Lou Y."/>
            <person name="Martinez D."/>
            <person name="Medina C."/>
            <person name="Morgan J."/>
            <person name="Nandkeshwar R."/>
            <person name="Noonan J.P."/>
            <person name="Pitluck S."/>
            <person name="Pollard M."/>
            <person name="Predki P."/>
            <person name="Priest J."/>
            <person name="Ramirez L."/>
            <person name="Retterer J."/>
            <person name="Rodriguez A."/>
            <person name="Rogers S."/>
            <person name="Salamov A."/>
            <person name="Salazar A."/>
            <person name="Thayer N."/>
            <person name="Tice H."/>
            <person name="Tsai M."/>
            <person name="Ustaszewska A."/>
            <person name="Vo N."/>
            <person name="Wheeler J."/>
            <person name="Wu K."/>
            <person name="Yang J."/>
            <person name="Dickson M."/>
            <person name="Cheng J.-F."/>
            <person name="Eichler E.E."/>
            <person name="Olsen A."/>
            <person name="Pennacchio L.A."/>
            <person name="Rokhsar D.S."/>
            <person name="Richardson P."/>
            <person name="Lucas S.M."/>
            <person name="Myers R.M."/>
            <person name="Rubin E.M."/>
        </authorList>
    </citation>
    <scope>NUCLEOTIDE SEQUENCE [LARGE SCALE GENOMIC DNA]</scope>
</reference>
<reference key="6">
    <citation type="submission" date="2005-09" db="EMBL/GenBank/DDBJ databases">
        <authorList>
            <person name="Mural R.J."/>
            <person name="Istrail S."/>
            <person name="Sutton G.G."/>
            <person name="Florea L."/>
            <person name="Halpern A.L."/>
            <person name="Mobarry C.M."/>
            <person name="Lippert R."/>
            <person name="Walenz B."/>
            <person name="Shatkay H."/>
            <person name="Dew I."/>
            <person name="Miller J.R."/>
            <person name="Flanigan M.J."/>
            <person name="Edwards N.J."/>
            <person name="Bolanos R."/>
            <person name="Fasulo D."/>
            <person name="Halldorsson B.V."/>
            <person name="Hannenhalli S."/>
            <person name="Turner R."/>
            <person name="Yooseph S."/>
            <person name="Lu F."/>
            <person name="Nusskern D.R."/>
            <person name="Shue B.C."/>
            <person name="Zheng X.H."/>
            <person name="Zhong F."/>
            <person name="Delcher A.L."/>
            <person name="Huson D.H."/>
            <person name="Kravitz S.A."/>
            <person name="Mouchard L."/>
            <person name="Reinert K."/>
            <person name="Remington K.A."/>
            <person name="Clark A.G."/>
            <person name="Waterman M.S."/>
            <person name="Eichler E.E."/>
            <person name="Adams M.D."/>
            <person name="Hunkapiller M.W."/>
            <person name="Myers E.W."/>
            <person name="Venter J.C."/>
        </authorList>
    </citation>
    <scope>NUCLEOTIDE SEQUENCE [LARGE SCALE GENOMIC DNA]</scope>
</reference>
<reference key="7">
    <citation type="journal article" date="2004" name="Genome Res.">
        <title>The status, quality, and expansion of the NIH full-length cDNA project: the Mammalian Gene Collection (MGC).</title>
        <authorList>
            <consortium name="The MGC Project Team"/>
        </authorList>
    </citation>
    <scope>NUCLEOTIDE SEQUENCE [LARGE SCALE MRNA] (ISOFORM 1)</scope>
    <source>
        <tissue>Brain</tissue>
    </source>
</reference>
<reference key="8">
    <citation type="journal article" date="1989" name="Mol. Cell. Biol.">
        <title>Differential transcription of exon 1 of the human c-fms gene in placental trophoblasts and monocytes.</title>
        <authorList>
            <person name="Visvader J."/>
            <person name="Verma I.M."/>
        </authorList>
    </citation>
    <scope>NUCLEOTIDE SEQUENCE [GENOMIC DNA] OF 1-16</scope>
</reference>
<reference key="9">
    <citation type="journal article" date="1986" name="J. Virol.">
        <title>The amino-terminal domain of the v-fms oncogene product includes a functional signal peptide that directs synthesis of a transforming glycoprotein in the absence of feline leukemia virus gag sequences.</title>
        <authorList>
            <person name="Wheeler E.F."/>
            <person name="Roussel M.F."/>
            <person name="Hampe A."/>
            <person name="Walker M.H."/>
            <person name="Fried V.A."/>
            <person name="Look A.T."/>
            <person name="Rettenmier C.W."/>
            <person name="Sherr C.J."/>
        </authorList>
    </citation>
    <scope>NUCLEOTIDE SEQUENCE [GENOMIC DNA] OF 1-16</scope>
</reference>
<reference key="10">
    <citation type="submission" date="1996-11" db="EMBL/GenBank/DDBJ databases">
        <title>Expression of a novel exon in the 5' UTR of human c-fms transcripts.</title>
        <authorList>
            <person name="Flick M.B."/>
            <person name="Sapi E."/>
            <person name="Kacinski B.M."/>
        </authorList>
    </citation>
    <scope>NUCLEOTIDE SEQUENCE [GENOMIC DNA] OF 1-16</scope>
    <source>
        <tissue>Placenta</tissue>
    </source>
</reference>
<reference key="11">
    <citation type="journal article" date="1985" name="Cell">
        <title>Expression of the human c-fms proto-oncogene in hematopoietic cells and its deletion in the 5q- syndrome.</title>
        <authorList>
            <person name="Nienhuis A.W."/>
            <person name="Bunn H.F."/>
            <person name="Turner P.H."/>
            <person name="Gopal T.V."/>
            <person name="Nash W.G."/>
            <person name="O'Brien S.J."/>
            <person name="Sherr C.J."/>
        </authorList>
    </citation>
    <scope>NUCLEOTIDE SEQUENCE [GENOMIC DNA] OF 244-295</scope>
</reference>
<reference key="12">
    <citation type="journal article" date="1986" name="Proc. Natl. Acad. Sci. U.S.A.">
        <title>'Replacement' of COOH-terminal truncation of v-fms with c-fms sequences markedly reduces transformation potential.</title>
        <authorList>
            <person name="Browning P.J."/>
            <person name="Bunn H.F."/>
            <person name="Cline A."/>
            <person name="Shuman M."/>
            <person name="Nienhuis A.W."/>
        </authorList>
    </citation>
    <scope>NUCLEOTIDE SEQUENCE [MRNA] OF 874-972 (ISOFORM 1)</scope>
</reference>
<reference key="13">
    <citation type="journal article" date="1993" name="Blood">
        <title>Expression of human colony-stimulating factor-1 (CSF-1) receptor in murine pluripotent hematopoietic NFS-60 cells induces long-term proliferation in response to CSF-1 without loss of erythroid differentiation potential.</title>
        <authorList>
            <person name="Bourette R.P."/>
            <person name="Mouchiroud G."/>
            <person name="Ouazana R."/>
            <person name="Morle F."/>
            <person name="Godet J."/>
            <person name="Blanchet J.P."/>
        </authorList>
    </citation>
    <scope>FUNCTION IN CELL PROLIFERATION</scope>
</reference>
<reference key="14">
    <citation type="journal article" date="1993" name="EMBO J.">
        <title>Activation of Src family kinases by colony stimulating factor-1, and their association with its receptor.</title>
        <authorList>
            <person name="Courtneidge S.A."/>
            <person name="Dhand R."/>
            <person name="Pilat D."/>
            <person name="Twamley G.M."/>
            <person name="Waterfield M.D."/>
            <person name="Roussel M.F."/>
        </authorList>
    </citation>
    <scope>INTERACTION WITH SRC; FYN AND YES1</scope>
    <scope>MUTAGENESIS OF TYR-809</scope>
</reference>
<reference key="15">
    <citation type="journal article" date="1995" name="Oncogene">
        <title>Transcriptional regulation of the c-fms (CSF-1R) proto-oncogene in human breast carcinoma cells by glucocorticoids.</title>
        <authorList>
            <person name="Sapi E."/>
            <person name="Flick M.B."/>
            <person name="Gilmore-Hebert M."/>
            <person name="Rodov S."/>
            <person name="Kacinski B.M."/>
        </authorList>
    </citation>
    <scope>INDUCTION BY GLUCOCORTICOIDS</scope>
</reference>
<reference key="16">
    <citation type="journal article" date="1999" name="Oncogene">
        <title>Cell specific transformation by c-fms activating loop mutations is attributable to constitutive receptor degradation.</title>
        <authorList>
            <person name="Morley G.M."/>
            <person name="Uden M."/>
            <person name="Gullick W.J."/>
            <person name="Dibb N.J."/>
        </authorList>
    </citation>
    <scope>MUTAGENESIS OF TYR-708 AND ASP-802</scope>
</reference>
<reference key="17">
    <citation type="journal article" date="2003" name="J. Biol. Chem.">
        <title>The inositol 5'-phosphatase SHIP-1 and the Src kinase Lyn negatively regulate macrophage colony-stimulating factor-induced Akt activity.</title>
        <authorList>
            <person name="Baran C.P."/>
            <person name="Tridandapani S."/>
            <person name="Helgason C.D."/>
            <person name="Humphries R.K."/>
            <person name="Krystal G."/>
            <person name="Marsh C.B."/>
        </authorList>
    </citation>
    <scope>FUNCTION IN CELLULAR SIGNALING; PHOSPHORYLATION OF INPP5D AND ACTIVATION OF AKT1</scope>
</reference>
<reference key="18">
    <citation type="journal article" date="2004" name="J. Cell Biol.">
        <title>Autocrine CSF-1R activation promotes Src-dependent disruption of mammary epithelial architecture.</title>
        <authorList>
            <person name="Wrobel C.N."/>
            <person name="Debnath J."/>
            <person name="Lin E."/>
            <person name="Beausoleil S."/>
            <person name="Roussel M.F."/>
            <person name="Brugge J.S."/>
        </authorList>
    </citation>
    <scope>FUNCTION IN REGULATION OF CELL PROLIFERATION; CELL ADHESION; CELL SHAPE AND INTEGRITY OF CELL JUNCTIONS</scope>
    <scope>MUTAGENESIS OF LEU-301 AND TYR-969</scope>
    <scope>ROLE IN DISEASE</scope>
</reference>
<reference key="19">
    <citation type="journal article" date="2005" name="J. Proteome Res.">
        <title>Human plasma N-glycoproteome analysis by immunoaffinity subtraction, hydrazide chemistry, and mass spectrometry.</title>
        <authorList>
            <person name="Liu T."/>
            <person name="Qian W.-J."/>
            <person name="Gritsenko M.A."/>
            <person name="Camp D.G. II"/>
            <person name="Monroe M.E."/>
            <person name="Moore R.J."/>
            <person name="Smith R.D."/>
        </authorList>
    </citation>
    <scope>GLYCOSYLATION [LARGE SCALE ANALYSIS] AT ASN-302 AND ASN-353</scope>
    <source>
        <tissue>Plasma</tissue>
    </source>
</reference>
<reference key="20">
    <citation type="journal article" date="2006" name="Mol. Cancer Ther.">
        <title>Inhibition of phosphorylation of the colony-stimulating factor-1 receptor (c-Fms) tyrosine kinase in transfected cells by ABT-869 and other tyrosine kinase inhibitors.</title>
        <authorList>
            <person name="Guo J."/>
            <person name="Marcotte P.A."/>
            <person name="McCall J.O."/>
            <person name="Dai Y."/>
            <person name="Pease L.J."/>
            <person name="Michaelides M.R."/>
            <person name="Davidsen S.K."/>
            <person name="Glaser K.B."/>
        </authorList>
    </citation>
    <scope>FUNCTION AS CSF1 RECEPTOR</scope>
    <scope>CATALYTIC ACTIVITY</scope>
    <scope>AUTOPHOSPHORYLATION</scope>
    <scope>ROLE IN DISEASE</scope>
    <scope>ACTIVITY REGULATION</scope>
</reference>
<reference key="21">
    <citation type="journal article" date="2006" name="Mol. Cancer Ther.">
        <title>A c-fms tyrosine kinase inhibitor, Ki20227, suppresses osteoclast differentiation and osteolytic bone destruction in a bone metastasis model.</title>
        <authorList>
            <person name="Ohno H."/>
            <person name="Kubo K."/>
            <person name="Murooka H."/>
            <person name="Kobayashi Y."/>
            <person name="Nishitoba T."/>
            <person name="Shibuya M."/>
            <person name="Yoneda T."/>
            <person name="Isoe T."/>
        </authorList>
    </citation>
    <scope>FUNCTION IN CELL PROLIFERATION</scope>
    <scope>CATALYTIC ACTIVITY</scope>
    <scope>AUTOPHOSPHORYLATION</scope>
    <scope>ROLE IN DISEASE</scope>
    <scope>ACTIVITY REGULATION</scope>
</reference>
<reference key="22">
    <citation type="journal article" date="2006" name="Oncogene">
        <title>FMS receptor for M-CSF (CSF-1) is sensitive to the kinase inhibitor imatinib and mutation of Asp-802 to Val confers resistance.</title>
        <authorList>
            <person name="Taylor J.R."/>
            <person name="Brownlow N."/>
            <person name="Domin J."/>
            <person name="Dibb N.J."/>
        </authorList>
    </citation>
    <scope>FUNCTION IN REGULATION OF CELL PROLIFERATION AND CELL SHAPE</scope>
    <scope>CATALYTIC ACTIVITY</scope>
    <scope>UBIQUITINATION</scope>
    <scope>ACTIVITY REGULATION</scope>
    <scope>MUTAGENESIS OF ASP-802</scope>
</reference>
<reference key="23">
    <citation type="journal article" date="2008" name="Science">
        <title>Discovery of a cytokine and its receptor by functional screening of the extracellular proteome.</title>
        <authorList>
            <person name="Lin H."/>
            <person name="Lee E."/>
            <person name="Hestir K."/>
            <person name="Leo C."/>
            <person name="Huang M."/>
            <person name="Bosch E."/>
            <person name="Halenbeck R."/>
            <person name="Wu G."/>
            <person name="Zhou A."/>
            <person name="Behrens D."/>
            <person name="Hollenbaugh D."/>
            <person name="Linnemann T."/>
            <person name="Qin M."/>
            <person name="Wong J."/>
            <person name="Chu K."/>
            <person name="Doberstein S.K."/>
            <person name="Williams L.T."/>
        </authorList>
    </citation>
    <scope>FUNCTION AS IL34 RECEPTOR</scope>
</reference>
<reference key="24">
    <citation type="journal article" date="2009" name="Int. J. Cancer">
        <title>Imatinib mesylate suppresses bone metastases of breast cancer by inhibiting osteoclasts through the blockade of c-Fms signals.</title>
        <authorList>
            <person name="Hiraga T."/>
            <person name="Nakamura H."/>
        </authorList>
    </citation>
    <scope>ROLE IN DISEASE</scope>
    <scope>ACTIVITY REGULATION</scope>
</reference>
<reference key="25">
    <citation type="journal article" date="2009" name="Cancer Res.">
        <title>Invasion of human breast cancer cells in vivo requires both paracrine and autocrine loops involving the colony-stimulating factor-1 receptor.</title>
        <authorList>
            <person name="Patsialou A."/>
            <person name="Wyckoff J."/>
            <person name="Wang Y."/>
            <person name="Goswami S."/>
            <person name="Stanley E.R."/>
            <person name="Condeelis J.S."/>
        </authorList>
    </citation>
    <scope>ROLE IN DISEASE</scope>
</reference>
<reference key="26">
    <citation type="journal article" date="2009" name="Mol. Cell. Proteomics">
        <title>Large-scale proteomics analysis of the human kinome.</title>
        <authorList>
            <person name="Oppermann F.S."/>
            <person name="Gnad F."/>
            <person name="Olsen J.V."/>
            <person name="Hornberger R."/>
            <person name="Greff Z."/>
            <person name="Keri G."/>
            <person name="Mann M."/>
            <person name="Daub H."/>
        </authorList>
    </citation>
    <scope>PHOSPHORYLATION [LARGE SCALE ANALYSIS] AT TYR-699 AND SER-713</scope>
    <scope>IDENTIFICATION BY MASS SPECTROMETRY [LARGE SCALE ANALYSIS]</scope>
</reference>
<reference key="27">
    <citation type="journal article" date="2010" name="Bioorg. Med. Chem.">
        <title>Colony stimulating factor-1 receptor as a target for small molecule inhibitors.</title>
        <authorList>
            <person name="Mashkani B."/>
            <person name="Griffith R."/>
            <person name="Ashman L.K."/>
        </authorList>
    </citation>
    <scope>AUTOPHOSPHORYLATION</scope>
    <scope>ACTIVITY REGULATION</scope>
</reference>
<reference key="28">
    <citation type="journal article" date="2010" name="Cell Death Differ.">
        <title>IL-34 and M-CSF share the receptor Fms but are not identical in biological activity and signal activation.</title>
        <authorList>
            <person name="Chihara T."/>
            <person name="Suzu S."/>
            <person name="Hassan R."/>
            <person name="Chutiwitoonchai N."/>
            <person name="Hiyoshi M."/>
            <person name="Motoyoshi K."/>
            <person name="Kimura F."/>
            <person name="Okada S."/>
        </authorList>
    </citation>
    <scope>FUNCTION AS RECEPTOR FOR IL34 AND CSF1</scope>
    <scope>PHOSPHORYLATION AT TYR-546; TYR-699; TYR-708; TYR-723 AND TYR-809</scope>
    <scope>AUTOPHOSPHORYLATION</scope>
    <scope>ACTIVITY REGULATION</scope>
    <scope>INTERACTION WITH IL34 AND CSF1</scope>
</reference>
<reference key="29">
    <citation type="journal article" date="2010" name="Cytokine">
        <title>Macrophage-colony stimulating factor and interleukin-34 induce chemokines in human whole blood.</title>
        <authorList>
            <person name="Eda H."/>
            <person name="Zhang J."/>
            <person name="Keith R.H."/>
            <person name="Michener M."/>
            <person name="Beidler D.R."/>
            <person name="Monahan J.B."/>
        </authorList>
    </citation>
    <scope>FUNCTION IN RELEASE OF PRO-INFLAMMATORY CHEMOKINES</scope>
</reference>
<reference key="30">
    <citation type="journal article" date="2010" name="J. Leukoc. Biol.">
        <title>Functional overlap but differential expression of CSF-1 and IL-34 in their CSF-1 receptor-mediated regulation of myeloid cells.</title>
        <authorList>
            <person name="Wei S."/>
            <person name="Nandi S."/>
            <person name="Chitu V."/>
            <person name="Yeung Y.G."/>
            <person name="Yu W."/>
            <person name="Huang M."/>
            <person name="Williams L.T."/>
            <person name="Lin H."/>
            <person name="Stanley E.R."/>
        </authorList>
    </citation>
    <scope>FUNCTION AS IL34 AND CSF1 RECEPTOR; ACTIVATION OF MAPK1/ERK2; MAPK3/ERK1; PHOSPHORYLATION AT TYR-723</scope>
    <scope>AUTOPHOSPHORYLATION</scope>
</reference>
<reference key="31">
    <citation type="journal article" date="2004" name="Trends Cell Biol.">
        <title>CSF-1 regulation of the wandering macrophage: complexity in action.</title>
        <authorList>
            <person name="Pixley F.J."/>
            <person name="Stanley E.R."/>
        </authorList>
    </citation>
    <scope>REVIEW ON FUNCTION; SIGNALING PATHWAYS AND PHOSPHORYLATION</scope>
</reference>
<reference key="32">
    <citation type="journal article" date="2006" name="Curr. Opin. Immunol.">
        <title>Colony-stimulating factor-1 in immunity and inflammation.</title>
        <authorList>
            <person name="Chitu V."/>
            <person name="Stanley E.R."/>
        </authorList>
    </citation>
    <scope>REVIEW ON FUNCTION IN IMMUNITY AND INFLAMMATION</scope>
    <scope>ROLE IN DISEASE</scope>
</reference>
<reference key="33">
    <citation type="journal article" date="2008" name="Int. Immunopharmacol.">
        <title>Macrophage colony stimulating factor: not just for macrophages anymore! A gateway into complex biologies.</title>
        <authorList>
            <person name="Douglass T.G."/>
            <person name="Driggers L."/>
            <person name="Zhang J.G."/>
            <person name="Hoa N."/>
            <person name="Delgado C."/>
            <person name="Williams C.C."/>
            <person name="Dan Q."/>
            <person name="Sanchez R."/>
            <person name="Jeffes E.W."/>
            <person name="Wepsic H.T."/>
            <person name="Myers M.P."/>
            <person name="Koths K."/>
            <person name="Jadus M.R."/>
        </authorList>
    </citation>
    <scope>REVIEW ON FUNCTION; SIGNALING PATHWAYS AND PHOSPHORYLATION</scope>
</reference>
<reference key="34">
    <citation type="journal article" date="2009" name="Annu. Rev. Immunol.">
        <title>Blood monocytes: development, heterogeneity, and relationship with dendritic cells.</title>
        <authorList>
            <person name="Auffray C."/>
            <person name="Sieweke M.H."/>
            <person name="Geissmann F."/>
        </authorList>
    </citation>
    <scope>REVIEW</scope>
</reference>
<reference key="35">
    <citation type="journal article" date="2014" name="J. Proteomics">
        <title>An enzyme assisted RP-RPLC approach for in-depth analysis of human liver phosphoproteome.</title>
        <authorList>
            <person name="Bian Y."/>
            <person name="Song C."/>
            <person name="Cheng K."/>
            <person name="Dong M."/>
            <person name="Wang F."/>
            <person name="Huang J."/>
            <person name="Sun D."/>
            <person name="Wang L."/>
            <person name="Ye M."/>
            <person name="Zou H."/>
        </authorList>
    </citation>
    <scope>IDENTIFICATION BY MASS SPECTROMETRY [LARGE SCALE ANALYSIS]</scope>
    <source>
        <tissue>Liver</tissue>
    </source>
</reference>
<reference key="36">
    <citation type="journal article" date="2007" name="J. Biol. Chem.">
        <title>Crystal structure of the tyrosine kinase domain of colony-stimulating factor-1 receptor (cFMS) in complex with two inhibitors.</title>
        <authorList>
            <person name="Schubert C."/>
            <person name="Schalk-Hihi C."/>
            <person name="Struble G.T."/>
            <person name="Ma H.C."/>
            <person name="Petrounia I.P."/>
            <person name="Brandt B."/>
            <person name="Deckman I.C."/>
            <person name="Patch R.J."/>
            <person name="Player M.R."/>
            <person name="Spurlino J.C."/>
            <person name="Springer B.A."/>
        </authorList>
    </citation>
    <scope>X-RAY CRYSTALLOGRAPHY (1.80 ANGSTROMS) OF 538-922 IN COMPLEXES WITH ARYLAMIDE AND QUINOLONE INHIBITORS</scope>
    <scope>DOMAIN</scope>
</reference>
<reference key="37">
    <citation type="journal article" date="2007" name="J. Mol. Biol.">
        <title>The 2.7 A crystal structure of the autoinhibited human c-Fms kinase domain.</title>
        <authorList>
            <person name="Walter M."/>
            <person name="Lucet I.S."/>
            <person name="Patel O."/>
            <person name="Broughton S.E."/>
            <person name="Bamert R."/>
            <person name="Williams N.K."/>
            <person name="Fantino E."/>
            <person name="Wilks A.F."/>
            <person name="Rossjohn J."/>
        </authorList>
    </citation>
    <scope>X-RAY CRYSTALLOGRAPHY (2.70 ANGSTROMS) OF 543-918 IN AUTOINHIBITED CONFORMATION</scope>
    <scope>DOMAIN</scope>
</reference>
<reference key="38">
    <citation type="journal article" date="2008" name="Bioorg. Med. Chem. Lett.">
        <title>Design and synthesis of a pyrido[2,3-d]pyrimidin-5-one class of anti-inflammatory FMS inhibitors.</title>
        <authorList>
            <person name="Huang H."/>
            <person name="Hutta D.A."/>
            <person name="Hu H."/>
            <person name="DesJarlais R.L."/>
            <person name="Schubert C."/>
            <person name="Petrounia I.P."/>
            <person name="Chaikin M.A."/>
            <person name="Manthey C.L."/>
            <person name="Player M.R."/>
        </authorList>
    </citation>
    <scope>X-RAY CRYSTALLOGRAPHY (2.02 ANGSTROMS) OF 538-922 IN COMPLEX WITH PYRIMIDINOPYRIDONE INHIBITOR</scope>
    <scope>CATALYTIC ACTIVITY</scope>
</reference>
<reference key="39">
    <citation type="journal article" date="2009" name="J. Med. Chem.">
        <title>Pyrido[2,3-d]pyrimidin-5-ones: a novel class of antiinflammatory macrophage colony-stimulating factor-1 receptor inhibitors.</title>
        <authorList>
            <person name="Huang H."/>
            <person name="Hutta D.A."/>
            <person name="Rinker J.M."/>
            <person name="Hu H."/>
            <person name="Parsons W.H."/>
            <person name="Schubert C."/>
            <person name="DesJarlais R.L."/>
            <person name="Crysler C.S."/>
            <person name="Chaikin M.A."/>
            <person name="Donatelli R.R."/>
            <person name="Chen Y."/>
            <person name="Cheng D."/>
            <person name="Zhou Z."/>
            <person name="Yurkow E."/>
            <person name="Manthey C.L."/>
            <person name="Player M.R."/>
        </authorList>
    </citation>
    <scope>X-RAY CRYSTALLOGRAPHY (1.95 ANGSTROMS) OF 538-922 IN COMPLEX WITH INHIBITOR</scope>
    <scope>CATALYTIC ACTIVITY</scope>
    <scope>FUNCTION IN INFLAMMATION AND DISEASE</scope>
</reference>
<reference key="40">
    <citation type="journal article" date="2010" name="Bioorg. Med. Chem. Lett.">
        <title>Structure-based drug design enables conversion of a DFG-in binding CSF-1R kinase inhibitor to a DFG-out binding mode.</title>
        <authorList>
            <person name="Meyers M.J."/>
            <person name="Pelc M."/>
            <person name="Kamtekar S."/>
            <person name="Day J."/>
            <person name="Poda G.I."/>
            <person name="Hall M.K."/>
            <person name="Michener M.L."/>
            <person name="Reitz B.A."/>
            <person name="Mathis K.J."/>
            <person name="Pierce B.S."/>
            <person name="Parikh M.D."/>
            <person name="Mischke D.A."/>
            <person name="Long S.A."/>
            <person name="Parlow J.J."/>
            <person name="Anderson D.R."/>
            <person name="Thorarensen A."/>
        </authorList>
    </citation>
    <scope>X-RAY CRYSTALLOGRAPHY (2.50 ANGSTROMS) OF 538-922 IN COMPLEXES WITH INHIBITORS</scope>
    <scope>CATALYTIC ACTIVITY</scope>
    <scope>ACTIVITY REGULATION</scope>
</reference>
<reference key="41">
    <citation type="journal article" date="2007" name="Nature">
        <title>Patterns of somatic mutation in human cancer genomes.</title>
        <authorList>
            <person name="Greenman C."/>
            <person name="Stephens P."/>
            <person name="Smith R."/>
            <person name="Dalgliesh G.L."/>
            <person name="Hunter C."/>
            <person name="Bignell G."/>
            <person name="Davies H."/>
            <person name="Teague J."/>
            <person name="Butler A."/>
            <person name="Stevens C."/>
            <person name="Edkins S."/>
            <person name="O'Meara S."/>
            <person name="Vastrik I."/>
            <person name="Schmidt E.E."/>
            <person name="Avis T."/>
            <person name="Barthorpe S."/>
            <person name="Bhamra G."/>
            <person name="Buck G."/>
            <person name="Choudhury B."/>
            <person name="Clements J."/>
            <person name="Cole J."/>
            <person name="Dicks E."/>
            <person name="Forbes S."/>
            <person name="Gray K."/>
            <person name="Halliday K."/>
            <person name="Harrison R."/>
            <person name="Hills K."/>
            <person name="Hinton J."/>
            <person name="Jenkinson A."/>
            <person name="Jones D."/>
            <person name="Menzies A."/>
            <person name="Mironenko T."/>
            <person name="Perry J."/>
            <person name="Raine K."/>
            <person name="Richardson D."/>
            <person name="Shepherd R."/>
            <person name="Small A."/>
            <person name="Tofts C."/>
            <person name="Varian J."/>
            <person name="Webb T."/>
            <person name="West S."/>
            <person name="Widaa S."/>
            <person name="Yates A."/>
            <person name="Cahill D.P."/>
            <person name="Louis D.N."/>
            <person name="Goldstraw P."/>
            <person name="Nicholson A.G."/>
            <person name="Brasseur F."/>
            <person name="Looijenga L."/>
            <person name="Weber B.L."/>
            <person name="Chiew Y.-E."/>
            <person name="DeFazio A."/>
            <person name="Greaves M.F."/>
            <person name="Green A.R."/>
            <person name="Campbell P."/>
            <person name="Birney E."/>
            <person name="Easton D.F."/>
            <person name="Chenevix-Trench G."/>
            <person name="Tan M.-H."/>
            <person name="Khoo S.K."/>
            <person name="Teh B.T."/>
            <person name="Yuen S.T."/>
            <person name="Leung S.Y."/>
            <person name="Wooster R."/>
            <person name="Futreal P.A."/>
            <person name="Stratton M.R."/>
        </authorList>
    </citation>
    <scope>VARIANTS [LARGE SCALE ANALYSIS] GLY-32; ARG-362; SER-413; VAL-536; HIS-693; ASP-920 AND GLN-921</scope>
</reference>
<reference key="42">
    <citation type="journal article" date="2012" name="Nat. Genet.">
        <title>Mutations in the colony stimulating factor 1 receptor (CSF1R) gene cause hereditary diffuse leukoencephalopathy with spheroids.</title>
        <authorList>
            <person name="Rademakers R."/>
            <person name="Baker M."/>
            <person name="Nicholson A.M."/>
            <person name="Rutherford N.J."/>
            <person name="Finch N."/>
            <person name="Soto-Ortolaza A."/>
            <person name="Lash J."/>
            <person name="Wider C."/>
            <person name="Wojtas A."/>
            <person name="DeJesus-Hernandez M."/>
            <person name="Adamson J."/>
            <person name="Kouri N."/>
            <person name="Sundal C."/>
            <person name="Shuster E.A."/>
            <person name="Aasly J."/>
            <person name="MacKenzie J."/>
            <person name="Roeber S."/>
            <person name="Kretzschmar H.A."/>
            <person name="Boeve B.F."/>
            <person name="Knopman D.S."/>
            <person name="Petersen R.C."/>
            <person name="Cairns N.J."/>
            <person name="Ghetti B."/>
            <person name="Spina S."/>
            <person name="Garbern J."/>
            <person name="Tselis A.C."/>
            <person name="Uitti R."/>
            <person name="Das P."/>
            <person name="Van Gerpen J.A."/>
            <person name="Meschia J.F."/>
            <person name="Levy S."/>
            <person name="Broderick D.F."/>
            <person name="Graff-Radford N."/>
            <person name="Ross O.A."/>
            <person name="Miller B.B."/>
            <person name="Swerdlow R.H."/>
            <person name="Dickson D.W."/>
            <person name="Wszolek Z.K."/>
        </authorList>
    </citation>
    <scope>VARIANTS HDLS1 774-CYS--ASN-814 DEL; 585-GLY--LYS-619 DELINS ALA; GLU-589; LYS-633; THR-766; PRO-770; ASN-775; THR-794; TYR-837; SER-849; PHE-849 DEL; PRO-868; THR-875 AND THR-878</scope>
    <scope>VARIANTS HIS-710; ARG-747 AND ASP-920</scope>
    <scope>CHARACTERIZATION OF VARIANTS HDLS1 LYS-633; THR-766 AND THR-875</scope>
</reference>
<reference key="43">
    <citation type="journal article" date="2013" name="Neurology">
        <title>CSF1R mutations link POLD and HDLS as a single disease entity.</title>
        <authorList>
            <person name="Nicholson A.M."/>
            <person name="Baker M.C."/>
            <person name="Finch N.A."/>
            <person name="Rutherford N.J."/>
            <person name="Wider C."/>
            <person name="Graff-Radford N.R."/>
            <person name="Nelson P.T."/>
            <person name="Clark H.B."/>
            <person name="Wszolek Z.K."/>
            <person name="Dickson D.W."/>
            <person name="Knopman D.S."/>
            <person name="Rademakers R."/>
        </authorList>
    </citation>
    <scope>VARIANTS HDLS1 THR-766 AND HIS-782</scope>
    <scope>CHARACTERIZATION OF VARIANTS HDLS1 HIS-782 AND THR-875</scope>
    <scope>AUTOPHOSPHORYLATION</scope>
</reference>
<reference key="44">
    <citation type="journal article" date="2014" name="J. Neurol.">
        <title>Hereditary diffuse leukoencephalopathy with axonal spheroids: three patients with stroke-like presentation carrying new mutations in the CSF1R gene.</title>
        <authorList>
            <person name="Battisti C."/>
            <person name="Di Donato I."/>
            <person name="Bianchi S."/>
            <person name="Monti L."/>
            <person name="Formichi P."/>
            <person name="Rufa A."/>
            <person name="Taglia I."/>
            <person name="Cerase A."/>
            <person name="Dotti M.T."/>
            <person name="Federico A."/>
        </authorList>
    </citation>
    <scope>VARIANTS HDLS1 ARG-653; PHE-843 AND THR-906</scope>
</reference>
<reference key="45">
    <citation type="journal article" date="2014" name="Neurology">
        <title>Haploinsufficiency of CSF-1R and clinicopathologic characterization in patients with HDLS.</title>
        <authorList>
            <person name="Konno T."/>
            <person name="Tada M."/>
            <person name="Tada M."/>
            <person name="Koyama A."/>
            <person name="Nozaki H."/>
            <person name="Harigaya Y."/>
            <person name="Nishimiya J."/>
            <person name="Matsunaga A."/>
            <person name="Yoshikura N."/>
            <person name="Ishihara K."/>
            <person name="Arakawa M."/>
            <person name="Isami A."/>
            <person name="Okazaki K."/>
            <person name="Yokoo H."/>
            <person name="Itoh K."/>
            <person name="Yoneda M."/>
            <person name="Kawamura M."/>
            <person name="Inuzuka T."/>
            <person name="Takahashi H."/>
            <person name="Nishizawa M."/>
            <person name="Onodera O."/>
            <person name="Kakita A."/>
            <person name="Ikeuchi T."/>
        </authorList>
    </citation>
    <scope>VARIANTS HDLS1 ASP-765; GLU-781; THR-794 AND SER-824</scope>
    <scope>CHARACTERIZATION OF VARIANTS HDLS1 ASP-765; GLU-781; THR-794 AND SER-824</scope>
    <scope>AUTOPHOSPHORYLATION</scope>
</reference>
<reference key="46">
    <citation type="journal article" date="2019" name="Am. J. Hum. Genet.">
        <title>Bi-allelic CSF1R Mutations Cause Skeletal Dysplasia of Dysosteosclerosis-Pyle Disease Spectrum and Degenerative Encephalopathy with Brain Malformation.</title>
        <authorList>
            <person name="Guo L."/>
            <person name="Bertola D.R."/>
            <person name="Takanohashi A."/>
            <person name="Saito A."/>
            <person name="Segawa Y."/>
            <person name="Yokota T."/>
            <person name="Ishibashi S."/>
            <person name="Nishida Y."/>
            <person name="Yamamoto G.L."/>
            <person name="Franco J.F.D.S."/>
            <person name="Honjo R.S."/>
            <person name="Kim C.A."/>
            <person name="Musso C.M."/>
            <person name="Timmons M."/>
            <person name="Pizzino A."/>
            <person name="Taft R.J."/>
            <person name="Lajoie B."/>
            <person name="Knight M.A."/>
            <person name="Fischbeck K.H."/>
            <person name="Singleton A.B."/>
            <person name="Ferreira C.R."/>
            <person name="Wang Z."/>
            <person name="Yan L."/>
            <person name="Garbern J.Y."/>
            <person name="Simsek-Kiper P.O."/>
            <person name="Ohashi H."/>
            <person name="Robey P.G."/>
            <person name="Boyde A."/>
            <person name="Matsumoto N."/>
            <person name="Miyake N."/>
            <person name="Spranger J."/>
            <person name="Schiffmann R."/>
            <person name="Vanderver A."/>
            <person name="Nishimura G."/>
            <person name="Passos-Bueno M.R.D.S."/>
            <person name="Simons C."/>
            <person name="Ishikawa K."/>
            <person name="Ikegawa S."/>
        </authorList>
    </citation>
    <scope>INVOLVEMENT IN BANDDOS</scope>
    <scope>VARIANTS BANDDOS LEU-132; 481-GLN--CYS-972 DEL AND LYS-627 DEL</scope>
    <scope>CHARACTERIZATION OF VARIANTS BANDDOS LEU-132 AND LYS-627 DEL</scope>
    <scope>FUNCTION</scope>
</reference>
<reference key="47">
    <citation type="journal article" date="2019" name="Am. J. Hum. Genet.">
        <title>Homozygous Mutations in CSF1R Cause a Pediatric-Onset Leukoencephalopathy and Can Result in Congenital Absence of Microglia.</title>
        <authorList>
            <person name="Oosterhof N."/>
            <person name="Chang I.J."/>
            <person name="Karimiani E.G."/>
            <person name="Kuil L.E."/>
            <person name="Jensen D.M."/>
            <person name="Daza R."/>
            <person name="Young E."/>
            <person name="Astle L."/>
            <person name="van der Linde H.C."/>
            <person name="Shivaram G.M."/>
            <person name="Demmers J."/>
            <person name="Latimer C.S."/>
            <person name="Keene C.D."/>
            <person name="Loter E."/>
            <person name="Maroofian R."/>
            <person name="van Ham T.J."/>
            <person name="Hevner R.F."/>
            <person name="Bennett J.T."/>
        </authorList>
    </citation>
    <scope>VARIANT BANDDOS GLN-643</scope>
    <scope>FUNCTION</scope>
</reference>
<comment type="function">
    <text evidence="9 10 11 13 14 15 18 19 20 21 24 25 26 31 32 34">Tyrosine-protein kinase that acts as a cell-surface receptor for CSF1 and IL34 and plays an essential role in the regulation of survival, proliferation and differentiation of hematopoietic precursor cells, especially mononuclear phagocytes, such as macrophages and monocytes. Promotes the release of pro-inflammatory chemokines in response to IL34 and CSF1, and thereby plays an important role in innate immunity and in inflammatory processes. Plays an important role in the regulation of osteoclast proliferation and differentiation, the regulation of bone resorption, and is required for normal bone and tooth development. Required for normal male and female fertility, and for normal development of milk ducts and acinar structures in the mammary gland during pregnancy. Promotes reorganization of the actin cytoskeleton, regulates formation of membrane ruffles, cell adhesion and cell migration, and promotes cancer cell invasion. Activates several signaling pathways in response to ligand binding, including the ERK1/2 and the JNK pathway (PubMed:20504948, PubMed:30982609). Phosphorylates PIK3R1, PLCG2, GRB2, SLA2 and CBL. Activation of PLCG2 leads to the production of the cellular signaling molecules diacylglycerol and inositol 1,4,5-trisphosphate, that then lead to the activation of protein kinase C family members, especially PRKCD. Phosphorylation of PIK3R1, the regulatory subunit of phosphatidylinositol 3-kinase, leads to activation of the AKT1 signaling pathway. Activated CSF1R also mediates activation of the MAP kinases MAPK1/ERK2 and/or MAPK3/ERK1, and of the SRC family kinases SRC, FYN and YES1. Activated CSF1R transmits signals both via proteins that directly interact with phosphorylated tyrosine residues in its intracellular domain, or via adapter proteins, such as GRB2. Promotes activation of STAT family members STAT3, STAT5A and/or STAT5B. Promotes tyrosine phosphorylation of SHC1 and INPP5D/SHIP-1. Receptor signaling is down-regulated by protein phosphatases, such as INPP5D/SHIP-1, that dephosphorylate the receptor and its downstream effectors, and by rapid internalization of the activated receptor. In the central nervous system, may play a role in the development of microglia macrophages (PubMed:30982608).</text>
</comment>
<comment type="catalytic activity">
    <reaction evidence="6 11 14 15 17 20 22">
        <text>L-tyrosyl-[protein] + ATP = O-phospho-L-tyrosyl-[protein] + ADP + H(+)</text>
        <dbReference type="Rhea" id="RHEA:10596"/>
        <dbReference type="Rhea" id="RHEA-COMP:10136"/>
        <dbReference type="Rhea" id="RHEA-COMP:20101"/>
        <dbReference type="ChEBI" id="CHEBI:15378"/>
        <dbReference type="ChEBI" id="CHEBI:30616"/>
        <dbReference type="ChEBI" id="CHEBI:46858"/>
        <dbReference type="ChEBI" id="CHEBI:61978"/>
        <dbReference type="ChEBI" id="CHEBI:456216"/>
        <dbReference type="EC" id="2.7.10.1"/>
    </reaction>
</comment>
<comment type="activity regulation">
    <text evidence="11 14 15 19 22 23 24">Present in an inactive conformation in the absence of bound ligand. CSF1 or IL34 binding leads to dimerization and activation by autophosphorylation on tyrosine residues. Inhibited by imatinib/STI-571 (Gleevec), dasatinib, sunitinib/SU11248, lestaurtinib/CEP-701, midostaurin/PKC-412, Ki20227, linifanib/ABT-869, Axitinib/AG013736, sorafenib/BAY 43-9006 and GW2580.</text>
</comment>
<comment type="subunit">
    <text evidence="1 17 20 24 33">Interacts with INPPL1/SHIP2 and THOC5 (By similarity). Monomer. Homodimer. Interacts with CSF1 and IL34. Interaction with dimeric CSF1 or IL34 leads to receptor homodimerization. Interacts (tyrosine phosphorylated) with PLCG2 (via SH2 domain). Interacts (tyrosine phosphorylated) with PIK3R1 (via SH2 domain). Interacts (tyrosine phosphorylated) with FYN, YES1 and SRC (via SH2 domain). Interacts (tyrosine phosphorylated) with CBL, GRB2 and SLA2.</text>
</comment>
<comment type="interaction">
    <interactant intactId="EBI-2835440">
        <id>P07333</id>
    </interactant>
    <interactant intactId="EBI-2872294">
        <id>P09603</id>
        <label>CSF1</label>
    </interactant>
    <organismsDiffer>false</organismsDiffer>
    <experiments>13</experiments>
</comment>
<comment type="interaction">
    <interactant intactId="EBI-2835440">
        <id>P07333</id>
    </interactant>
    <interactant intactId="EBI-1383428">
        <id>Q15375</id>
        <label>EPHA7</label>
    </interactant>
    <organismsDiffer>false</organismsDiffer>
    <experiments>2</experiments>
</comment>
<comment type="interaction">
    <interactant intactId="EBI-2835440">
        <id>P07333</id>
    </interactant>
    <interactant intactId="EBI-1059294">
        <id>P29323</id>
        <label>EPHB2</label>
    </interactant>
    <organismsDiffer>false</organismsDiffer>
    <experiments>2</experiments>
</comment>
<comment type="interaction">
    <interactant intactId="EBI-2835440">
        <id>P07333</id>
    </interactant>
    <interactant intactId="EBI-15978980">
        <id>Q6ZMJ4-1</id>
        <label>IL34</label>
    </interactant>
    <organismsDiffer>false</organismsDiffer>
    <experiments>9</experiments>
</comment>
<comment type="subcellular location">
    <subcellularLocation>
        <location>Cell membrane</location>
        <topology>Single-pass type I membrane protein</topology>
    </subcellularLocation>
</comment>
<comment type="alternative products">
    <event type="alternative splicing"/>
    <isoform>
        <id>P07333-1</id>
        <name>1</name>
        <sequence type="displayed"/>
    </isoform>
    <isoform>
        <id>P07333-2</id>
        <name>2</name>
        <sequence type="described" ref="VSP_047757 VSP_047758"/>
    </isoform>
</comment>
<comment type="tissue specificity">
    <text>Expressed in bone marrow and in differentiated blood mononuclear cells.</text>
</comment>
<comment type="induction">
    <text evidence="35">Up-regulated by glucocorticoids.</text>
</comment>
<comment type="domain">
    <text>The juxtamembrane domain functions as autoinhibitory region. Phosphorylation of tyrosine residues in this region leads to a conformation change and activation of the kinase.</text>
</comment>
<comment type="domain">
    <text>The activation loop plays an important role in the regulation of kinase activity. Phosphorylation of tyrosine residues in this region leads to a conformation change and activation of the kinase.</text>
</comment>
<comment type="PTM">
    <text evidence="11 24 28 29">Autophosphorylated in response to CSF1 or IL34 binding (PubMed:20489731, PubMed:23408870, PubMed:24336230). Phosphorylation at Tyr-561 is important for normal down-regulation of signaling by ubiquitination, internalization and degradation. Phosphorylation at Tyr-561 and Tyr-809 is important for interaction with SRC family members, including FYN, YES1 and SRC, and for subsequent activation of these protein kinases. Phosphorylation at Tyr-699 and Tyr-923 is important for interaction with GRB2. Phosphorylation at Tyr-723 is important for interaction with PIK3R1. Phosphorylation at Tyr-708 is important for normal receptor degradation. Phosphorylation at Tyr-723 and Tyr-809 is important for interaction with PLCG2. Phosphorylation at Tyr-969 is important for interaction with CBL. Dephosphorylation by PTPN2 negatively regulates downstream signaling and macrophage differentiation.</text>
</comment>
<comment type="PTM">
    <text evidence="11">Ubiquitinated. Becomes rapidly polyubiquitinated after autophosphorylation, leading to its degradation.</text>
</comment>
<comment type="disease">
    <text>Aberrant expression of CSF1 or CSF1R can promote cancer cell proliferation, invasion and formation of metastases. Overexpression of CSF1 or CSF1R is observed in a significant percentage of breast, ovarian, prostate, and endometrial cancers.</text>
</comment>
<comment type="disease">
    <text>Aberrant expression of CSF1 or CSF1R may play a role in inflammatory diseases, such as rheumatoid arthritis, glomerulonephritis, atherosclerosis, and allograft rejection.</text>
</comment>
<comment type="disease" evidence="27 28 29 30">
    <disease id="DI-03392">
        <name>Leukoencephalopathy, hereditary diffuse, with spheroids 1</name>
        <acronym>HDLS1</acronym>
        <description>An autosomal dominant adult-onset rapidly progressive neurodegenerative disorder characterized by variable behavioral, cognitive, and motor changes. Patients often die of dementia within 6 years of onset. Brain imaging shows patchy abnormalities in the cerebral white matter, predominantly affecting the frontal and parietal lobes.</description>
        <dbReference type="MIM" id="221820"/>
    </disease>
    <text>The disease is caused by variants affecting the gene represented in this entry.</text>
</comment>
<comment type="disease" evidence="31 32">
    <disease id="DI-05595">
        <name>Brain abnormalities, neurodegeneration, and dysosteosclerosis</name>
        <acronym>BANDDOS</acronym>
        <description>An autosomal recessive disease with variable manifestations. Main features are brain malformations with calcifying leukoencephalopathy, progressive neurodegeneration, and bone sclerotic features. The age at onset ranges from infancy to early adulthood. Neurologic features include loss of previous motor and language skills, cognitive impairment, spasticity, and focal seizures. Brain imaging shows periventricular white matter abnormalities and calcifications, large cisterna magna or Dandy-Walker malformation, and sometimes agenesis of the corpus callosum.</description>
        <dbReference type="MIM" id="618476"/>
    </disease>
    <text>The disease is caused by variants affecting the gene represented in this entry.</text>
</comment>
<comment type="similarity">
    <text evidence="5">Belongs to the protein kinase superfamily. Tyr protein kinase family. CSF-1/PDGF receptor subfamily.</text>
</comment>
<comment type="online information" name="Atlas of Genetics and Cytogenetics in Oncology and Haematology">
    <link uri="https://atlasgeneticsoncology.org/gene/40161/CSF1R"/>
</comment>
<dbReference type="EC" id="2.7.10.1"/>
<dbReference type="EMBL" id="X03663">
    <property type="protein sequence ID" value="CAA27300.1"/>
    <property type="molecule type" value="mRNA"/>
</dbReference>
<dbReference type="EMBL" id="U63963">
    <property type="protein sequence ID" value="AAB51696.1"/>
    <property type="molecule type" value="Genomic_DNA"/>
</dbReference>
<dbReference type="EMBL" id="M25786">
    <property type="protein sequence ID" value="AAA58421.1"/>
    <property type="molecule type" value="mRNA"/>
</dbReference>
<dbReference type="EMBL" id="EU826593">
    <property type="protein sequence ID" value="ACF47629.1"/>
    <property type="molecule type" value="mRNA"/>
</dbReference>
<dbReference type="EMBL" id="AC011382">
    <property type="status" value="NOT_ANNOTATED_CDS"/>
    <property type="molecule type" value="Genomic_DNA"/>
</dbReference>
<dbReference type="EMBL" id="CH471062">
    <property type="protein sequence ID" value="EAW61749.1"/>
    <property type="molecule type" value="Genomic_DNA"/>
</dbReference>
<dbReference type="EMBL" id="CH471062">
    <property type="protein sequence ID" value="EAW61750.1"/>
    <property type="molecule type" value="Genomic_DNA"/>
</dbReference>
<dbReference type="EMBL" id="BC047521">
    <property type="protein sequence ID" value="AAH47521.1"/>
    <property type="molecule type" value="mRNA"/>
</dbReference>
<dbReference type="EMBL" id="M14002">
    <property type="protein sequence ID" value="AAA35849.1"/>
    <property type="molecule type" value="Genomic_DNA"/>
</dbReference>
<dbReference type="EMBL" id="U78096">
    <property type="protein sequence ID" value="AAB51235.1"/>
    <property type="molecule type" value="Genomic_DNA"/>
</dbReference>
<dbReference type="EMBL" id="M11067">
    <property type="protein sequence ID" value="AAA35848.1"/>
    <property type="molecule type" value="Genomic_DNA"/>
</dbReference>
<dbReference type="EMBL" id="M14193">
    <property type="protein sequence ID" value="AAA35834.1"/>
    <property type="molecule type" value="mRNA"/>
</dbReference>
<dbReference type="CCDS" id="CCDS4302.1">
    <molecule id="P07333-1"/>
</dbReference>
<dbReference type="PIR" id="S08123">
    <property type="entry name" value="TVHUMD"/>
</dbReference>
<dbReference type="RefSeq" id="NP_001275634.1">
    <molecule id="P07333-1"/>
    <property type="nucleotide sequence ID" value="NM_001288705.3"/>
</dbReference>
<dbReference type="RefSeq" id="NP_001336665.1">
    <molecule id="P07333-1"/>
    <property type="nucleotide sequence ID" value="NM_001349736.2"/>
</dbReference>
<dbReference type="RefSeq" id="NP_001362249.1">
    <molecule id="P07333-1"/>
    <property type="nucleotide sequence ID" value="NM_001375320.1"/>
</dbReference>
<dbReference type="RefSeq" id="NP_005202.2">
    <molecule id="P07333-1"/>
    <property type="nucleotide sequence ID" value="NM_005211.3"/>
</dbReference>
<dbReference type="PDB" id="2I0V">
    <property type="method" value="X-ray"/>
    <property type="resolution" value="2.80 A"/>
    <property type="chains" value="A=538-678, A=753-922"/>
</dbReference>
<dbReference type="PDB" id="2I0Y">
    <property type="method" value="X-ray"/>
    <property type="resolution" value="1.90 A"/>
    <property type="chains" value="A=538-678, A=753-922"/>
</dbReference>
<dbReference type="PDB" id="2I1M">
    <property type="method" value="X-ray"/>
    <property type="resolution" value="1.80 A"/>
    <property type="chains" value="A=538-678, A=753-922"/>
</dbReference>
<dbReference type="PDB" id="2OGV">
    <property type="method" value="X-ray"/>
    <property type="resolution" value="2.70 A"/>
    <property type="chains" value="A=543-918"/>
</dbReference>
<dbReference type="PDB" id="3BEA">
    <property type="method" value="X-ray"/>
    <property type="resolution" value="2.02 A"/>
    <property type="chains" value="A=538-678, A=753-922"/>
</dbReference>
<dbReference type="PDB" id="3DPK">
    <property type="method" value="X-ray"/>
    <property type="resolution" value="1.95 A"/>
    <property type="chains" value="A=538-678, A=771-922"/>
</dbReference>
<dbReference type="PDB" id="3KRJ">
    <property type="method" value="X-ray"/>
    <property type="resolution" value="2.10 A"/>
    <property type="chains" value="A=538-678, A=753-922"/>
</dbReference>
<dbReference type="PDB" id="3KRL">
    <property type="method" value="X-ray"/>
    <property type="resolution" value="2.40 A"/>
    <property type="chains" value="A=538-678, A=753-922"/>
</dbReference>
<dbReference type="PDB" id="3LCD">
    <property type="method" value="X-ray"/>
    <property type="resolution" value="2.50 A"/>
    <property type="chains" value="A=538-919"/>
</dbReference>
<dbReference type="PDB" id="3LCO">
    <property type="method" value="X-ray"/>
    <property type="resolution" value="3.40 A"/>
    <property type="chains" value="A=550-919"/>
</dbReference>
<dbReference type="PDB" id="4DKD">
    <property type="method" value="X-ray"/>
    <property type="resolution" value="3.00 A"/>
    <property type="chains" value="C=20-299"/>
</dbReference>
<dbReference type="PDB" id="4HW7">
    <property type="method" value="X-ray"/>
    <property type="resolution" value="2.90 A"/>
    <property type="chains" value="A=542-919"/>
</dbReference>
<dbReference type="PDB" id="4LIQ">
    <property type="method" value="X-ray"/>
    <property type="resolution" value="2.60 A"/>
    <property type="chains" value="E=2-512"/>
</dbReference>
<dbReference type="PDB" id="4R7H">
    <property type="method" value="X-ray"/>
    <property type="resolution" value="2.80 A"/>
    <property type="chains" value="A=542-919"/>
</dbReference>
<dbReference type="PDB" id="4R7I">
    <property type="method" value="X-ray"/>
    <property type="resolution" value="2.75 A"/>
    <property type="chains" value="A=542-919"/>
</dbReference>
<dbReference type="PDB" id="4WRL">
    <property type="method" value="X-ray"/>
    <property type="resolution" value="2.80 A"/>
    <property type="chains" value="A/C=20-296"/>
</dbReference>
<dbReference type="PDB" id="4WRM">
    <property type="method" value="X-ray"/>
    <property type="resolution" value="6.85 A"/>
    <property type="chains" value="A=20-504"/>
</dbReference>
<dbReference type="PDB" id="6IG8">
    <property type="method" value="X-ray"/>
    <property type="resolution" value="1.80 A"/>
    <property type="chains" value="A=550-919"/>
</dbReference>
<dbReference type="PDB" id="6N33">
    <property type="method" value="X-ray"/>
    <property type="resolution" value="2.25 A"/>
    <property type="chains" value="A=542-919"/>
</dbReference>
<dbReference type="PDB" id="6T2W">
    <property type="method" value="X-ray"/>
    <property type="resolution" value="1.70 A"/>
    <property type="chains" value="A=542-919"/>
</dbReference>
<dbReference type="PDB" id="6WXJ">
    <property type="method" value="X-ray"/>
    <property type="resolution" value="2.62 A"/>
    <property type="chains" value="A=538-678, A=753-922"/>
</dbReference>
<dbReference type="PDB" id="7MFC">
    <property type="method" value="X-ray"/>
    <property type="resolution" value="2.80 A"/>
    <property type="chains" value="A=542-919"/>
</dbReference>
<dbReference type="PDB" id="8CGC">
    <property type="method" value="X-ray"/>
    <property type="resolution" value="1.93 A"/>
    <property type="chains" value="A=542-919"/>
</dbReference>
<dbReference type="PDB" id="8JOT">
    <property type="method" value="X-ray"/>
    <property type="resolution" value="1.69 A"/>
    <property type="chains" value="A=542-919"/>
</dbReference>
<dbReference type="PDB" id="8W1L">
    <property type="method" value="X-ray"/>
    <property type="resolution" value="2.26 A"/>
    <property type="chains" value="A=538-922"/>
</dbReference>
<dbReference type="PDBsum" id="2I0V"/>
<dbReference type="PDBsum" id="2I0Y"/>
<dbReference type="PDBsum" id="2I1M"/>
<dbReference type="PDBsum" id="2OGV"/>
<dbReference type="PDBsum" id="3BEA"/>
<dbReference type="PDBsum" id="3DPK"/>
<dbReference type="PDBsum" id="3KRJ"/>
<dbReference type="PDBsum" id="3KRL"/>
<dbReference type="PDBsum" id="3LCD"/>
<dbReference type="PDBsum" id="3LCO"/>
<dbReference type="PDBsum" id="4DKD"/>
<dbReference type="PDBsum" id="4HW7"/>
<dbReference type="PDBsum" id="4LIQ"/>
<dbReference type="PDBsum" id="4R7H"/>
<dbReference type="PDBsum" id="4R7I"/>
<dbReference type="PDBsum" id="4WRL"/>
<dbReference type="PDBsum" id="4WRM"/>
<dbReference type="PDBsum" id="6IG8"/>
<dbReference type="PDBsum" id="6N33"/>
<dbReference type="PDBsum" id="6T2W"/>
<dbReference type="PDBsum" id="6WXJ"/>
<dbReference type="PDBsum" id="7MFC"/>
<dbReference type="PDBsum" id="8CGC"/>
<dbReference type="PDBsum" id="8JOT"/>
<dbReference type="PDBsum" id="8W1L"/>
<dbReference type="SMR" id="P07333"/>
<dbReference type="BioGRID" id="107823">
    <property type="interactions" value="53"/>
</dbReference>
<dbReference type="ComplexPortal" id="CPX-10333">
    <property type="entry name" value="IL34-CSF1R complex"/>
</dbReference>
<dbReference type="ComplexPortal" id="CPX-25717">
    <property type="entry name" value="Macrophage colony-stimulating factor-1 receptor-ligand complex"/>
</dbReference>
<dbReference type="DIP" id="DIP-59421N"/>
<dbReference type="FunCoup" id="P07333">
    <property type="interactions" value="1059"/>
</dbReference>
<dbReference type="IntAct" id="P07333">
    <property type="interactions" value="54"/>
</dbReference>
<dbReference type="MINT" id="P07333"/>
<dbReference type="STRING" id="9606.ENSP00000286301"/>
<dbReference type="BindingDB" id="P07333"/>
<dbReference type="ChEMBL" id="CHEMBL1844"/>
<dbReference type="DrugBank" id="DB07167">
    <property type="generic name" value="5-CYANO-FURAN-2-CARBOXYLIC ACID [5-HYDROXYMETHYL-2-(4-METHYL-PIPERIDIN-1-YL)-PHENYL]-AMIDE"/>
</dbReference>
<dbReference type="DrugBank" id="DB07202">
    <property type="generic name" value="6-CHLORO-3-(3-METHYLISOXAZOL-5-YL)-4-PHENYLQUINOLIN-2(1H)-ONE"/>
</dbReference>
<dbReference type="DrugBank" id="DB16388">
    <property type="generic name" value="Axatilimab"/>
</dbReference>
<dbReference type="DrugBank" id="DB16838">
    <property type="generic name" value="BLZ-945"/>
</dbReference>
<dbReference type="DrugBank" id="DB12147">
    <property type="generic name" value="Erdafitinib"/>
</dbReference>
<dbReference type="DrugBank" id="DB12010">
    <property type="generic name" value="Fostamatinib"/>
</dbReference>
<dbReference type="DrugBank" id="DB00619">
    <property type="generic name" value="Imatinib"/>
</dbReference>
<dbReference type="DrugBank" id="DB06080">
    <property type="generic name" value="Linifanib"/>
</dbReference>
<dbReference type="DrugBank" id="DB12978">
    <property type="generic name" value="Pexidartinib"/>
</dbReference>
<dbReference type="DrugBank" id="DB01268">
    <property type="generic name" value="Sunitinib"/>
</dbReference>
<dbReference type="DrugBank" id="DB15106">
    <property type="generic name" value="Surufatinib"/>
</dbReference>
<dbReference type="DrugBank" id="DB17520">
    <property type="generic name" value="Vimseltinib"/>
</dbReference>
<dbReference type="DrugCentral" id="P07333"/>
<dbReference type="GuidetoPHARMACOLOGY" id="1806"/>
<dbReference type="TCDB" id="8.A.23.1.41">
    <property type="family name" value="the basigin (basigin) family"/>
</dbReference>
<dbReference type="GlyConnect" id="1955">
    <property type="glycosylation" value="14 N-Linked glycans (3 sites)"/>
</dbReference>
<dbReference type="GlyCosmos" id="P07333">
    <property type="glycosylation" value="12 sites, 14 glycans"/>
</dbReference>
<dbReference type="GlyGen" id="P07333">
    <property type="glycosylation" value="12 sites, 32 N-linked glycans (7 sites)"/>
</dbReference>
<dbReference type="iPTMnet" id="P07333"/>
<dbReference type="PhosphoSitePlus" id="P07333"/>
<dbReference type="BioMuta" id="CSF1R"/>
<dbReference type="DMDM" id="547770"/>
<dbReference type="CPTAC" id="CPTAC-2838"/>
<dbReference type="CPTAC" id="CPTAC-3055"/>
<dbReference type="jPOST" id="P07333"/>
<dbReference type="MassIVE" id="P07333"/>
<dbReference type="PaxDb" id="9606-ENSP00000286301"/>
<dbReference type="PeptideAtlas" id="P07333"/>
<dbReference type="ProteomicsDB" id="51993">
    <molecule id="P07333-1"/>
</dbReference>
<dbReference type="ProteomicsDB" id="5930"/>
<dbReference type="ABCD" id="P07333">
    <property type="antibodies" value="61 sequenced antibodies"/>
</dbReference>
<dbReference type="Antibodypedia" id="1201">
    <property type="antibodies" value="1898 antibodies from 46 providers"/>
</dbReference>
<dbReference type="CPTC" id="P07333">
    <property type="antibodies" value="1 antibody"/>
</dbReference>
<dbReference type="DNASU" id="1436"/>
<dbReference type="Ensembl" id="ENST00000286301.7">
    <molecule id="P07333-1"/>
    <property type="protein sequence ID" value="ENSP00000286301.3"/>
    <property type="gene ID" value="ENSG00000182578.14"/>
</dbReference>
<dbReference type="Ensembl" id="ENST00000543093.1">
    <molecule id="P07333-2"/>
    <property type="protein sequence ID" value="ENSP00000445282.1"/>
    <property type="gene ID" value="ENSG00000182578.14"/>
</dbReference>
<dbReference type="Ensembl" id="ENST00000675795.1">
    <molecule id="P07333-1"/>
    <property type="protein sequence ID" value="ENSP00000501699.1"/>
    <property type="gene ID" value="ENSG00000182578.14"/>
</dbReference>
<dbReference type="GeneID" id="1436"/>
<dbReference type="KEGG" id="hsa:1436"/>
<dbReference type="MANE-Select" id="ENST00000675795.1">
    <property type="protein sequence ID" value="ENSP00000501699.1"/>
    <property type="RefSeq nucleotide sequence ID" value="NM_001288705.3"/>
    <property type="RefSeq protein sequence ID" value="NP_001275634.1"/>
</dbReference>
<dbReference type="UCSC" id="uc003lrm.3">
    <molecule id="P07333-1"/>
    <property type="organism name" value="human"/>
</dbReference>
<dbReference type="AGR" id="HGNC:2433"/>
<dbReference type="CTD" id="1436"/>
<dbReference type="DisGeNET" id="1436"/>
<dbReference type="GeneCards" id="CSF1R"/>
<dbReference type="GeneReviews" id="CSF1R"/>
<dbReference type="HGNC" id="HGNC:2433">
    <property type="gene designation" value="CSF1R"/>
</dbReference>
<dbReference type="HPA" id="ENSG00000182578">
    <property type="expression patterns" value="Tissue enhanced (lymphoid tissue, placenta)"/>
</dbReference>
<dbReference type="MalaCards" id="CSF1R"/>
<dbReference type="MIM" id="164770">
    <property type="type" value="gene"/>
</dbReference>
<dbReference type="MIM" id="221820">
    <property type="type" value="phenotype"/>
</dbReference>
<dbReference type="MIM" id="618476">
    <property type="type" value="phenotype"/>
</dbReference>
<dbReference type="neXtProt" id="NX_P07333"/>
<dbReference type="OpenTargets" id="ENSG00000182578"/>
<dbReference type="Orphanet" id="313808">
    <property type="disease" value="Adult-onset leukoencephalopathy with axonal spheroids and pigmented glia"/>
</dbReference>
<dbReference type="Orphanet" id="556985">
    <property type="disease" value="Early-onset calcifying leukoencephalopathy-skeletal dysplasia"/>
</dbReference>
<dbReference type="PharmGKB" id="PA26936"/>
<dbReference type="VEuPathDB" id="HostDB:ENSG00000182578"/>
<dbReference type="eggNOG" id="KOG0200">
    <property type="taxonomic scope" value="Eukaryota"/>
</dbReference>
<dbReference type="GeneTree" id="ENSGT00940000155506"/>
<dbReference type="HOGENOM" id="CLU_000288_49_0_1"/>
<dbReference type="InParanoid" id="P07333"/>
<dbReference type="OMA" id="TIHKAKY"/>
<dbReference type="OrthoDB" id="6077854at2759"/>
<dbReference type="PAN-GO" id="P07333">
    <property type="GO annotations" value="9 GO annotations based on evolutionary models"/>
</dbReference>
<dbReference type="PhylomeDB" id="P07333"/>
<dbReference type="TreeFam" id="TF325768"/>
<dbReference type="BRENDA" id="2.7.10.1">
    <property type="organism ID" value="2681"/>
</dbReference>
<dbReference type="PathwayCommons" id="P07333"/>
<dbReference type="Reactome" id="R-HSA-449836">
    <property type="pathway name" value="Other interleukin signaling"/>
</dbReference>
<dbReference type="Reactome" id="R-HSA-8853884">
    <property type="pathway name" value="Transcriptional Regulation by VENTX"/>
</dbReference>
<dbReference type="Reactome" id="R-HSA-9680350">
    <property type="pathway name" value="Signaling by CSF1 (M-CSF) in myeloid cells"/>
</dbReference>
<dbReference type="SignaLink" id="P07333"/>
<dbReference type="SIGNOR" id="P07333"/>
<dbReference type="BioGRID-ORCS" id="1436">
    <property type="hits" value="11 hits in 1187 CRISPR screens"/>
</dbReference>
<dbReference type="CD-CODE" id="91857CE7">
    <property type="entry name" value="Nucleolus"/>
</dbReference>
<dbReference type="ChiTaRS" id="CSF1R">
    <property type="organism name" value="human"/>
</dbReference>
<dbReference type="EvolutionaryTrace" id="P07333"/>
<dbReference type="GeneWiki" id="Colony_stimulating_factor_1_receptor"/>
<dbReference type="GenomeRNAi" id="1436"/>
<dbReference type="Pharos" id="P07333">
    <property type="development level" value="Tclin"/>
</dbReference>
<dbReference type="PRO" id="PR:P07333"/>
<dbReference type="Proteomes" id="UP000005640">
    <property type="component" value="Chromosome 5"/>
</dbReference>
<dbReference type="RNAct" id="P07333">
    <property type="molecule type" value="protein"/>
</dbReference>
<dbReference type="Bgee" id="ENSG00000182578">
    <property type="expression patterns" value="Expressed in granulocyte and 166 other cell types or tissues"/>
</dbReference>
<dbReference type="ExpressionAtlas" id="P07333">
    <property type="expression patterns" value="baseline and differential"/>
</dbReference>
<dbReference type="GO" id="GO:0009986">
    <property type="term" value="C:cell surface"/>
    <property type="evidence" value="ECO:0000250"/>
    <property type="project" value="UniProtKB"/>
</dbReference>
<dbReference type="GO" id="GO:1990682">
    <property type="term" value="C:CSF1-CSF1R complex"/>
    <property type="evidence" value="ECO:0000250"/>
    <property type="project" value="BHF-UCL"/>
</dbReference>
<dbReference type="GO" id="GO:0043231">
    <property type="term" value="C:intracellular membrane-bounded organelle"/>
    <property type="evidence" value="ECO:0000314"/>
    <property type="project" value="HPA"/>
</dbReference>
<dbReference type="GO" id="GO:0005654">
    <property type="term" value="C:nucleoplasm"/>
    <property type="evidence" value="ECO:0000314"/>
    <property type="project" value="HPA"/>
</dbReference>
<dbReference type="GO" id="GO:0005886">
    <property type="term" value="C:plasma membrane"/>
    <property type="evidence" value="ECO:0000314"/>
    <property type="project" value="HPA"/>
</dbReference>
<dbReference type="GO" id="GO:0043235">
    <property type="term" value="C:receptor complex"/>
    <property type="evidence" value="ECO:0000318"/>
    <property type="project" value="GO_Central"/>
</dbReference>
<dbReference type="GO" id="GO:0005524">
    <property type="term" value="F:ATP binding"/>
    <property type="evidence" value="ECO:0007669"/>
    <property type="project" value="UniProtKB-KW"/>
</dbReference>
<dbReference type="GO" id="GO:0019955">
    <property type="term" value="F:cytokine binding"/>
    <property type="evidence" value="ECO:0000314"/>
    <property type="project" value="UniProtKB"/>
</dbReference>
<dbReference type="GO" id="GO:0019838">
    <property type="term" value="F:growth factor binding"/>
    <property type="evidence" value="ECO:0000318"/>
    <property type="project" value="GO_Central"/>
</dbReference>
<dbReference type="GO" id="GO:0005011">
    <property type="term" value="F:macrophage colony-stimulating factor receptor activity"/>
    <property type="evidence" value="ECO:0000315"/>
    <property type="project" value="UniProtKB"/>
</dbReference>
<dbReference type="GO" id="GO:0042803">
    <property type="term" value="F:protein homodimerization activity"/>
    <property type="evidence" value="ECO:0000250"/>
    <property type="project" value="BHF-UCL"/>
</dbReference>
<dbReference type="GO" id="GO:0019903">
    <property type="term" value="F:protein phosphatase binding"/>
    <property type="evidence" value="ECO:0007669"/>
    <property type="project" value="Ensembl"/>
</dbReference>
<dbReference type="GO" id="GO:0004713">
    <property type="term" value="F:protein tyrosine kinase activity"/>
    <property type="evidence" value="ECO:0000304"/>
    <property type="project" value="ARUK-UCL"/>
</dbReference>
<dbReference type="GO" id="GO:0007411">
    <property type="term" value="P:axon guidance"/>
    <property type="evidence" value="ECO:0007669"/>
    <property type="project" value="Ensembl"/>
</dbReference>
<dbReference type="GO" id="GO:0016477">
    <property type="term" value="P:cell migration"/>
    <property type="evidence" value="ECO:0000318"/>
    <property type="project" value="GO_Central"/>
</dbReference>
<dbReference type="GO" id="GO:0008283">
    <property type="term" value="P:cell population proliferation"/>
    <property type="evidence" value="ECO:0000315"/>
    <property type="project" value="UniProtKB"/>
</dbReference>
<dbReference type="GO" id="GO:0007169">
    <property type="term" value="P:cell surface receptor protein tyrosine kinase signaling pathway"/>
    <property type="evidence" value="ECO:0000250"/>
    <property type="project" value="UniProtKB"/>
</dbReference>
<dbReference type="GO" id="GO:0045217">
    <property type="term" value="P:cell-cell junction maintenance"/>
    <property type="evidence" value="ECO:0000315"/>
    <property type="project" value="UniProtKB"/>
</dbReference>
<dbReference type="GO" id="GO:0071345">
    <property type="term" value="P:cellular response to cytokine stimulus"/>
    <property type="evidence" value="ECO:0000250"/>
    <property type="project" value="UniProtKB"/>
</dbReference>
<dbReference type="GO" id="GO:0036006">
    <property type="term" value="P:cellular response to macrophage colony-stimulating factor stimulus"/>
    <property type="evidence" value="ECO:0000315"/>
    <property type="project" value="UniProtKB"/>
</dbReference>
<dbReference type="GO" id="GO:0019221">
    <property type="term" value="P:cytokine-mediated signaling pathway"/>
    <property type="evidence" value="ECO:0000315"/>
    <property type="project" value="UniProtKB"/>
</dbReference>
<dbReference type="GO" id="GO:0021879">
    <property type="term" value="P:forebrain neuron differentiation"/>
    <property type="evidence" value="ECO:0007669"/>
    <property type="project" value="Ensembl"/>
</dbReference>
<dbReference type="GO" id="GO:0030097">
    <property type="term" value="P:hemopoiesis"/>
    <property type="evidence" value="ECO:0000315"/>
    <property type="project" value="UniProtKB"/>
</dbReference>
<dbReference type="GO" id="GO:0006954">
    <property type="term" value="P:inflammatory response"/>
    <property type="evidence" value="ECO:0000304"/>
    <property type="project" value="UniProtKB"/>
</dbReference>
<dbReference type="GO" id="GO:0045087">
    <property type="term" value="P:innate immune response"/>
    <property type="evidence" value="ECO:0007669"/>
    <property type="project" value="UniProtKB-KW"/>
</dbReference>
<dbReference type="GO" id="GO:0038145">
    <property type="term" value="P:macrophage colony-stimulating factor signaling pathway"/>
    <property type="evidence" value="ECO:0000250"/>
    <property type="project" value="BHF-UCL"/>
</dbReference>
<dbReference type="GO" id="GO:0030225">
    <property type="term" value="P:macrophage differentiation"/>
    <property type="evidence" value="ECO:0000304"/>
    <property type="project" value="UniProtKB"/>
</dbReference>
<dbReference type="GO" id="GO:0060603">
    <property type="term" value="P:mammary gland duct morphogenesis"/>
    <property type="evidence" value="ECO:0000304"/>
    <property type="project" value="UniProtKB"/>
</dbReference>
<dbReference type="GO" id="GO:0061518">
    <property type="term" value="P:microglial cell proliferation"/>
    <property type="evidence" value="ECO:0007669"/>
    <property type="project" value="Ensembl"/>
</dbReference>
<dbReference type="GO" id="GO:0030224">
    <property type="term" value="P:monocyte differentiation"/>
    <property type="evidence" value="ECO:0000304"/>
    <property type="project" value="UniProtKB"/>
</dbReference>
<dbReference type="GO" id="GO:0043066">
    <property type="term" value="P:negative regulation of apoptotic process"/>
    <property type="evidence" value="ECO:0007669"/>
    <property type="project" value="Ensembl"/>
</dbReference>
<dbReference type="GO" id="GO:0008285">
    <property type="term" value="P:negative regulation of cell population proliferation"/>
    <property type="evidence" value="ECO:0007669"/>
    <property type="project" value="Ensembl"/>
</dbReference>
<dbReference type="GO" id="GO:0021772">
    <property type="term" value="P:olfactory bulb development"/>
    <property type="evidence" value="ECO:0007669"/>
    <property type="project" value="Ensembl"/>
</dbReference>
<dbReference type="GO" id="GO:0030316">
    <property type="term" value="P:osteoclast differentiation"/>
    <property type="evidence" value="ECO:0000250"/>
    <property type="project" value="UniProtKB"/>
</dbReference>
<dbReference type="GO" id="GO:0018108">
    <property type="term" value="P:peptidyl-tyrosine phosphorylation"/>
    <property type="evidence" value="ECO:0000314"/>
    <property type="project" value="UniProtKB"/>
</dbReference>
<dbReference type="GO" id="GO:0044794">
    <property type="term" value="P:positive regulation by host of viral process"/>
    <property type="evidence" value="ECO:0007669"/>
    <property type="project" value="Ensembl"/>
</dbReference>
<dbReference type="GO" id="GO:0030335">
    <property type="term" value="P:positive regulation of cell migration"/>
    <property type="evidence" value="ECO:0000318"/>
    <property type="project" value="GO_Central"/>
</dbReference>
<dbReference type="GO" id="GO:2000147">
    <property type="term" value="P:positive regulation of cell motility"/>
    <property type="evidence" value="ECO:0000315"/>
    <property type="project" value="UniProtKB"/>
</dbReference>
<dbReference type="GO" id="GO:0008284">
    <property type="term" value="P:positive regulation of cell population proliferation"/>
    <property type="evidence" value="ECO:0000315"/>
    <property type="project" value="UniProtKB"/>
</dbReference>
<dbReference type="GO" id="GO:0032722">
    <property type="term" value="P:positive regulation of chemokine production"/>
    <property type="evidence" value="ECO:0000315"/>
    <property type="project" value="UniProtKB"/>
</dbReference>
<dbReference type="GO" id="GO:0070374">
    <property type="term" value="P:positive regulation of ERK1 and ERK2 cascade"/>
    <property type="evidence" value="ECO:0000250"/>
    <property type="project" value="UniProtKB"/>
</dbReference>
<dbReference type="GO" id="GO:0010759">
    <property type="term" value="P:positive regulation of macrophage chemotaxis"/>
    <property type="evidence" value="ECO:0000316"/>
    <property type="project" value="ARUK-UCL"/>
</dbReference>
<dbReference type="GO" id="GO:0120041">
    <property type="term" value="P:positive regulation of macrophage proliferation"/>
    <property type="evidence" value="ECO:0000316"/>
    <property type="project" value="ARUK-UCL"/>
</dbReference>
<dbReference type="GO" id="GO:0051897">
    <property type="term" value="P:positive regulation of phosphatidylinositol 3-kinase/protein kinase B signal transduction"/>
    <property type="evidence" value="ECO:0000250"/>
    <property type="project" value="UniProtKB"/>
</dbReference>
<dbReference type="GO" id="GO:0001934">
    <property type="term" value="P:positive regulation of protein phosphorylation"/>
    <property type="evidence" value="ECO:0000315"/>
    <property type="project" value="UniProtKB"/>
</dbReference>
<dbReference type="GO" id="GO:0061098">
    <property type="term" value="P:positive regulation of protein tyrosine kinase activity"/>
    <property type="evidence" value="ECO:0000315"/>
    <property type="project" value="UniProtKB"/>
</dbReference>
<dbReference type="GO" id="GO:0042531">
    <property type="term" value="P:positive regulation of tyrosine phosphorylation of STAT protein"/>
    <property type="evidence" value="ECO:0000250"/>
    <property type="project" value="UniProtKB"/>
</dbReference>
<dbReference type="GO" id="GO:0046777">
    <property type="term" value="P:protein autophosphorylation"/>
    <property type="evidence" value="ECO:0000314"/>
    <property type="project" value="UniProtKB"/>
</dbReference>
<dbReference type="GO" id="GO:0032956">
    <property type="term" value="P:regulation of actin cytoskeleton organization"/>
    <property type="evidence" value="ECO:0000250"/>
    <property type="project" value="UniProtKB"/>
</dbReference>
<dbReference type="GO" id="GO:0045124">
    <property type="term" value="P:regulation of bone resorption"/>
    <property type="evidence" value="ECO:0000250"/>
    <property type="project" value="UniProtKB"/>
</dbReference>
<dbReference type="GO" id="GO:0008360">
    <property type="term" value="P:regulation of cell shape"/>
    <property type="evidence" value="ECO:0000315"/>
    <property type="project" value="UniProtKB"/>
</dbReference>
<dbReference type="GO" id="GO:1905521">
    <property type="term" value="P:regulation of macrophage migration"/>
    <property type="evidence" value="ECO:0000250"/>
    <property type="project" value="UniProtKB"/>
</dbReference>
<dbReference type="GO" id="GO:0043408">
    <property type="term" value="P:regulation of MAPK cascade"/>
    <property type="evidence" value="ECO:0000318"/>
    <property type="project" value="GO_Central"/>
</dbReference>
<dbReference type="GO" id="GO:0002931">
    <property type="term" value="P:response to ischemia"/>
    <property type="evidence" value="ECO:0000250"/>
    <property type="project" value="ARUK-UCL"/>
</dbReference>
<dbReference type="GO" id="GO:0031529">
    <property type="term" value="P:ruffle organization"/>
    <property type="evidence" value="ECO:0000250"/>
    <property type="project" value="UniProtKB"/>
</dbReference>
<dbReference type="GO" id="GO:0007165">
    <property type="term" value="P:signal transduction"/>
    <property type="evidence" value="ECO:0000304"/>
    <property type="project" value="ProtInc"/>
</dbReference>
<dbReference type="CDD" id="cd00096">
    <property type="entry name" value="Ig"/>
    <property type="match status" value="1"/>
</dbReference>
<dbReference type="CDD" id="cd20936">
    <property type="entry name" value="IgI_3_CSF-1R"/>
    <property type="match status" value="1"/>
</dbReference>
<dbReference type="CDD" id="cd04975">
    <property type="entry name" value="IgI_4_SCFR_like"/>
    <property type="match status" value="1"/>
</dbReference>
<dbReference type="CDD" id="cd05106">
    <property type="entry name" value="PTKc_CSF-1R"/>
    <property type="match status" value="1"/>
</dbReference>
<dbReference type="FunFam" id="2.60.40.10:FF:001029">
    <property type="entry name" value="Macrophage colony-stimulating factor 1 receptor"/>
    <property type="match status" value="1"/>
</dbReference>
<dbReference type="FunFam" id="2.60.40.10:FF:001088">
    <property type="entry name" value="Macrophage colony-stimulating factor 1 receptor"/>
    <property type="match status" value="1"/>
</dbReference>
<dbReference type="FunFam" id="2.60.40.10:FF:001101">
    <property type="entry name" value="Macrophage colony-stimulating factor 1 receptor"/>
    <property type="match status" value="1"/>
</dbReference>
<dbReference type="FunFam" id="2.60.40.10:FF:001160">
    <property type="entry name" value="Macrophage colony-stimulating factor 1 receptor"/>
    <property type="match status" value="1"/>
</dbReference>
<dbReference type="FunFam" id="2.60.40.10:FF:001169">
    <property type="entry name" value="Macrophage colony-stimulating factor 1 receptor"/>
    <property type="match status" value="1"/>
</dbReference>
<dbReference type="FunFam" id="1.10.510.10:FF:000177">
    <property type="entry name" value="Mast/stem cell growth factor receptor"/>
    <property type="match status" value="1"/>
</dbReference>
<dbReference type="FunFam" id="3.30.200.20:FF:000025">
    <property type="entry name" value="Platelet-derived growth factor receptor alpha"/>
    <property type="match status" value="1"/>
</dbReference>
<dbReference type="Gene3D" id="2.60.40.10">
    <property type="entry name" value="Immunoglobulins"/>
    <property type="match status" value="5"/>
</dbReference>
<dbReference type="Gene3D" id="3.30.200.20">
    <property type="entry name" value="Phosphorylase Kinase, domain 1"/>
    <property type="match status" value="1"/>
</dbReference>
<dbReference type="Gene3D" id="1.10.510.10">
    <property type="entry name" value="Transferase(Phosphotransferase) domain 1"/>
    <property type="match status" value="1"/>
</dbReference>
<dbReference type="InterPro" id="IPR030658">
    <property type="entry name" value="CSF-1_receptor"/>
</dbReference>
<dbReference type="InterPro" id="IPR007110">
    <property type="entry name" value="Ig-like_dom"/>
</dbReference>
<dbReference type="InterPro" id="IPR036179">
    <property type="entry name" value="Ig-like_dom_sf"/>
</dbReference>
<dbReference type="InterPro" id="IPR013783">
    <property type="entry name" value="Ig-like_fold"/>
</dbReference>
<dbReference type="InterPro" id="IPR003599">
    <property type="entry name" value="Ig_sub"/>
</dbReference>
<dbReference type="InterPro" id="IPR003598">
    <property type="entry name" value="Ig_sub2"/>
</dbReference>
<dbReference type="InterPro" id="IPR013151">
    <property type="entry name" value="Immunoglobulin_dom"/>
</dbReference>
<dbReference type="InterPro" id="IPR011009">
    <property type="entry name" value="Kinase-like_dom_sf"/>
</dbReference>
<dbReference type="InterPro" id="IPR000719">
    <property type="entry name" value="Prot_kinase_dom"/>
</dbReference>
<dbReference type="InterPro" id="IPR017441">
    <property type="entry name" value="Protein_kinase_ATP_BS"/>
</dbReference>
<dbReference type="InterPro" id="IPR050122">
    <property type="entry name" value="RTK"/>
</dbReference>
<dbReference type="InterPro" id="IPR001245">
    <property type="entry name" value="Ser-Thr/Tyr_kinase_cat_dom"/>
</dbReference>
<dbReference type="InterPro" id="IPR008266">
    <property type="entry name" value="Tyr_kinase_AS"/>
</dbReference>
<dbReference type="InterPro" id="IPR020635">
    <property type="entry name" value="Tyr_kinase_cat_dom"/>
</dbReference>
<dbReference type="InterPro" id="IPR001824">
    <property type="entry name" value="Tyr_kinase_rcpt_3_CS"/>
</dbReference>
<dbReference type="PANTHER" id="PTHR24416:SF47">
    <property type="entry name" value="MACROPHAGE COLONY-STIMULATING FACTOR 1 RECEPTOR"/>
    <property type="match status" value="1"/>
</dbReference>
<dbReference type="PANTHER" id="PTHR24416">
    <property type="entry name" value="TYROSINE-PROTEIN KINASE RECEPTOR"/>
    <property type="match status" value="1"/>
</dbReference>
<dbReference type="Pfam" id="PF00047">
    <property type="entry name" value="ig"/>
    <property type="match status" value="1"/>
</dbReference>
<dbReference type="Pfam" id="PF25305">
    <property type="entry name" value="Ig_PDGFR_d4"/>
    <property type="match status" value="1"/>
</dbReference>
<dbReference type="Pfam" id="PF07714">
    <property type="entry name" value="PK_Tyr_Ser-Thr"/>
    <property type="match status" value="1"/>
</dbReference>
<dbReference type="PIRSF" id="PIRSF500947">
    <property type="entry name" value="CSF-1_receptor"/>
    <property type="match status" value="1"/>
</dbReference>
<dbReference type="PIRSF" id="PIRSF000615">
    <property type="entry name" value="TyrPK_CSF1-R"/>
    <property type="match status" value="1"/>
</dbReference>
<dbReference type="SMART" id="SM00409">
    <property type="entry name" value="IG"/>
    <property type="match status" value="5"/>
</dbReference>
<dbReference type="SMART" id="SM00408">
    <property type="entry name" value="IGc2"/>
    <property type="match status" value="2"/>
</dbReference>
<dbReference type="SMART" id="SM00219">
    <property type="entry name" value="TyrKc"/>
    <property type="match status" value="1"/>
</dbReference>
<dbReference type="SUPFAM" id="SSF48726">
    <property type="entry name" value="Immunoglobulin"/>
    <property type="match status" value="5"/>
</dbReference>
<dbReference type="SUPFAM" id="SSF56112">
    <property type="entry name" value="Protein kinase-like (PK-like)"/>
    <property type="match status" value="1"/>
</dbReference>
<dbReference type="PROSITE" id="PS50835">
    <property type="entry name" value="IG_LIKE"/>
    <property type="match status" value="3"/>
</dbReference>
<dbReference type="PROSITE" id="PS00107">
    <property type="entry name" value="PROTEIN_KINASE_ATP"/>
    <property type="match status" value="1"/>
</dbReference>
<dbReference type="PROSITE" id="PS50011">
    <property type="entry name" value="PROTEIN_KINASE_DOM"/>
    <property type="match status" value="1"/>
</dbReference>
<dbReference type="PROSITE" id="PS00109">
    <property type="entry name" value="PROTEIN_KINASE_TYR"/>
    <property type="match status" value="1"/>
</dbReference>
<dbReference type="PROSITE" id="PS00240">
    <property type="entry name" value="RECEPTOR_TYR_KIN_III"/>
    <property type="match status" value="1"/>
</dbReference>
<organism>
    <name type="scientific">Homo sapiens</name>
    <name type="common">Human</name>
    <dbReference type="NCBI Taxonomy" id="9606"/>
    <lineage>
        <taxon>Eukaryota</taxon>
        <taxon>Metazoa</taxon>
        <taxon>Chordata</taxon>
        <taxon>Craniata</taxon>
        <taxon>Vertebrata</taxon>
        <taxon>Euteleostomi</taxon>
        <taxon>Mammalia</taxon>
        <taxon>Eutheria</taxon>
        <taxon>Euarchontoglires</taxon>
        <taxon>Primates</taxon>
        <taxon>Haplorrhini</taxon>
        <taxon>Catarrhini</taxon>
        <taxon>Hominidae</taxon>
        <taxon>Homo</taxon>
    </lineage>
</organism>
<evidence type="ECO:0000250" key="1"/>
<evidence type="ECO:0000250" key="2">
    <source>
        <dbReference type="UniProtKB" id="P09581"/>
    </source>
</evidence>
<evidence type="ECO:0000255" key="3"/>
<evidence type="ECO:0000255" key="4">
    <source>
        <dbReference type="PROSITE-ProRule" id="PRU00114"/>
    </source>
</evidence>
<evidence type="ECO:0000255" key="5">
    <source>
        <dbReference type="PROSITE-ProRule" id="PRU00159"/>
    </source>
</evidence>
<evidence type="ECO:0000255" key="6">
    <source>
        <dbReference type="PROSITE-ProRule" id="PRU10028"/>
    </source>
</evidence>
<evidence type="ECO:0000256" key="7">
    <source>
        <dbReference type="SAM" id="MobiDB-lite"/>
    </source>
</evidence>
<evidence type="ECO:0000269" key="8">
    <source>
    </source>
</evidence>
<evidence type="ECO:0000269" key="9">
    <source>
    </source>
</evidence>
<evidence type="ECO:0000269" key="10">
    <source>
    </source>
</evidence>
<evidence type="ECO:0000269" key="11">
    <source>
    </source>
</evidence>
<evidence type="ECO:0000269" key="12">
    <source>
    </source>
</evidence>
<evidence type="ECO:0000269" key="13">
    <source>
    </source>
</evidence>
<evidence type="ECO:0000269" key="14">
    <source>
    </source>
</evidence>
<evidence type="ECO:0000269" key="15">
    <source>
    </source>
</evidence>
<evidence type="ECO:0000269" key="16">
    <source>
    </source>
</evidence>
<evidence type="ECO:0000269" key="17">
    <source>
    </source>
</evidence>
<evidence type="ECO:0000269" key="18">
    <source>
    </source>
</evidence>
<evidence type="ECO:0000269" key="19">
    <source>
    </source>
</evidence>
<evidence type="ECO:0000269" key="20">
    <source>
    </source>
</evidence>
<evidence type="ECO:0000269" key="21">
    <source>
    </source>
</evidence>
<evidence type="ECO:0000269" key="22">
    <source>
    </source>
</evidence>
<evidence type="ECO:0000269" key="23">
    <source>
    </source>
</evidence>
<evidence type="ECO:0000269" key="24">
    <source>
    </source>
</evidence>
<evidence type="ECO:0000269" key="25">
    <source>
    </source>
</evidence>
<evidence type="ECO:0000269" key="26">
    <source>
    </source>
</evidence>
<evidence type="ECO:0000269" key="27">
    <source>
    </source>
</evidence>
<evidence type="ECO:0000269" key="28">
    <source>
    </source>
</evidence>
<evidence type="ECO:0000269" key="29">
    <source>
    </source>
</evidence>
<evidence type="ECO:0000269" key="30">
    <source>
    </source>
</evidence>
<evidence type="ECO:0000269" key="31">
    <source>
    </source>
</evidence>
<evidence type="ECO:0000269" key="32">
    <source>
    </source>
</evidence>
<evidence type="ECO:0000269" key="33">
    <source>
    </source>
</evidence>
<evidence type="ECO:0000269" key="34">
    <source>
    </source>
</evidence>
<evidence type="ECO:0000269" key="35">
    <source>
    </source>
</evidence>
<evidence type="ECO:0000303" key="36">
    <source>
    </source>
</evidence>
<evidence type="ECO:0000305" key="37"/>
<evidence type="ECO:0007744" key="38">
    <source>
    </source>
</evidence>
<evidence type="ECO:0007829" key="39">
    <source>
        <dbReference type="PDB" id="2OGV"/>
    </source>
</evidence>
<evidence type="ECO:0007829" key="40">
    <source>
        <dbReference type="PDB" id="3BEA"/>
    </source>
</evidence>
<evidence type="ECO:0007829" key="41">
    <source>
        <dbReference type="PDB" id="3LCO"/>
    </source>
</evidence>
<evidence type="ECO:0007829" key="42">
    <source>
        <dbReference type="PDB" id="4DKD"/>
    </source>
</evidence>
<evidence type="ECO:0007829" key="43">
    <source>
        <dbReference type="PDB" id="4LIQ"/>
    </source>
</evidence>
<evidence type="ECO:0007829" key="44">
    <source>
        <dbReference type="PDB" id="4WRL"/>
    </source>
</evidence>
<evidence type="ECO:0007829" key="45">
    <source>
        <dbReference type="PDB" id="6IG8"/>
    </source>
</evidence>
<evidence type="ECO:0007829" key="46">
    <source>
        <dbReference type="PDB" id="6T2W"/>
    </source>
</evidence>
<evidence type="ECO:0007829" key="47">
    <source>
        <dbReference type="PDB" id="8JOT"/>
    </source>
</evidence>
<proteinExistence type="evidence at protein level"/>
<name>CSF1R_HUMAN</name>